<evidence type="ECO:0000250" key="1">
    <source>
        <dbReference type="UniProtKB" id="P34914"/>
    </source>
</evidence>
<evidence type="ECO:0000250" key="2">
    <source>
        <dbReference type="UniProtKB" id="P80299"/>
    </source>
</evidence>
<evidence type="ECO:0000255" key="3"/>
<evidence type="ECO:0000269" key="4">
    <source>
    </source>
</evidence>
<evidence type="ECO:0000269" key="5">
    <source>
    </source>
</evidence>
<evidence type="ECO:0000269" key="6">
    <source>
    </source>
</evidence>
<evidence type="ECO:0000269" key="7">
    <source>
    </source>
</evidence>
<evidence type="ECO:0000269" key="8">
    <source>
    </source>
</evidence>
<evidence type="ECO:0000269" key="9">
    <source>
    </source>
</evidence>
<evidence type="ECO:0000269" key="10">
    <source>
    </source>
</evidence>
<evidence type="ECO:0000269" key="11">
    <source>
    </source>
</evidence>
<evidence type="ECO:0000269" key="12">
    <source>
    </source>
</evidence>
<evidence type="ECO:0000269" key="13">
    <source>
    </source>
</evidence>
<evidence type="ECO:0000269" key="14">
    <source>
    </source>
</evidence>
<evidence type="ECO:0000269" key="15">
    <source>
    </source>
</evidence>
<evidence type="ECO:0000269" key="16">
    <source>
    </source>
</evidence>
<evidence type="ECO:0000269" key="17">
    <source>
    </source>
</evidence>
<evidence type="ECO:0000269" key="18">
    <source>
    </source>
</evidence>
<evidence type="ECO:0000269" key="19">
    <source>
    </source>
</evidence>
<evidence type="ECO:0000269" key="20">
    <source>
    </source>
</evidence>
<evidence type="ECO:0000269" key="21">
    <source ref="6"/>
</evidence>
<evidence type="ECO:0000303" key="22">
    <source>
    </source>
</evidence>
<evidence type="ECO:0000303" key="23">
    <source>
    </source>
</evidence>
<evidence type="ECO:0000303" key="24">
    <source>
    </source>
</evidence>
<evidence type="ECO:0000305" key="25"/>
<evidence type="ECO:0000305" key="26">
    <source>
    </source>
</evidence>
<evidence type="ECO:0000305" key="27">
    <source>
    </source>
</evidence>
<evidence type="ECO:0000312" key="28">
    <source>
        <dbReference type="HGNC" id="HGNC:3402"/>
    </source>
</evidence>
<evidence type="ECO:0007744" key="29">
    <source>
    </source>
</evidence>
<evidence type="ECO:0007829" key="30">
    <source>
        <dbReference type="PDB" id="4JNC"/>
    </source>
</evidence>
<evidence type="ECO:0007829" key="31">
    <source>
        <dbReference type="PDB" id="4X6X"/>
    </source>
</evidence>
<evidence type="ECO:0007829" key="32">
    <source>
        <dbReference type="PDB" id="5AIA"/>
    </source>
</evidence>
<evidence type="ECO:0007829" key="33">
    <source>
        <dbReference type="PDB" id="5ALG"/>
    </source>
</evidence>
<evidence type="ECO:0007829" key="34">
    <source>
        <dbReference type="PDB" id="5ALI"/>
    </source>
</evidence>
<evidence type="ECO:0007829" key="35">
    <source>
        <dbReference type="PDB" id="5ALQ"/>
    </source>
</evidence>
<evidence type="ECO:0007829" key="36">
    <source>
        <dbReference type="PDB" id="5ALV"/>
    </source>
</evidence>
<evidence type="ECO:0007829" key="37">
    <source>
        <dbReference type="PDB" id="5AM2"/>
    </source>
</evidence>
<evidence type="ECO:0007829" key="38">
    <source>
        <dbReference type="PDB" id="5MWA"/>
    </source>
</evidence>
<gene>
    <name evidence="28" type="primary">EPHX2</name>
</gene>
<protein>
    <recommendedName>
        <fullName evidence="25">Bifunctional epoxide hydrolase 2</fullName>
    </recommendedName>
    <domain>
        <recommendedName>
            <fullName>Cytosolic epoxide hydrolase 2</fullName>
            <shortName>CEH</shortName>
            <ecNumber evidence="6 7 10 19">3.3.2.10</ecNumber>
        </recommendedName>
        <alternativeName>
            <fullName>Epoxide hydratase</fullName>
        </alternativeName>
        <alternativeName>
            <fullName evidence="23 24">Soluble epoxide hydrolase</fullName>
            <shortName evidence="23 24">SEH</shortName>
        </alternativeName>
    </domain>
    <domain>
        <recommendedName>
            <fullName>Lipid-phosphate phosphatase</fullName>
            <ecNumber evidence="5 6">3.1.3.76</ecNumber>
        </recommendedName>
    </domain>
</protein>
<keyword id="KW-0002">3D-structure</keyword>
<keyword id="KW-0007">Acetylation</keyword>
<keyword id="KW-0025">Alternative splicing</keyword>
<keyword id="KW-0058">Aromatic hydrocarbons catabolism</keyword>
<keyword id="KW-0963">Cytoplasm</keyword>
<keyword id="KW-0216">Detoxification</keyword>
<keyword id="KW-0903">Direct protein sequencing</keyword>
<keyword id="KW-0378">Hydrolase</keyword>
<keyword id="KW-0443">Lipid metabolism</keyword>
<keyword id="KW-0449">Lipoprotein</keyword>
<keyword id="KW-0460">Magnesium</keyword>
<keyword id="KW-0479">Metal-binding</keyword>
<keyword id="KW-0511">Multifunctional enzyme</keyword>
<keyword id="KW-0576">Peroxisome</keyword>
<keyword id="KW-0597">Phosphoprotein</keyword>
<keyword id="KW-1267">Proteomics identification</keyword>
<keyword id="KW-1185">Reference proteome</keyword>
<feature type="chain" id="PRO_0000084111" description="Bifunctional epoxide hydrolase 2">
    <location>
        <begin position="1"/>
        <end position="555"/>
    </location>
</feature>
<feature type="domain" description="AB hydrolase-1" evidence="3">
    <location>
        <begin position="259"/>
        <end position="531"/>
    </location>
</feature>
<feature type="region of interest" description="Phosphatase">
    <location>
        <begin position="1"/>
        <end position="224"/>
    </location>
</feature>
<feature type="region of interest" description="Epoxide hydrolase">
    <location>
        <begin position="235"/>
        <end position="555"/>
    </location>
</feature>
<feature type="short sequence motif" description="Microbody targeting signal" evidence="3">
    <location>
        <begin position="553"/>
        <end position="555"/>
    </location>
</feature>
<feature type="active site" description="Nucleophile" evidence="9 11 12 13 14">
    <location>
        <position position="335"/>
    </location>
</feature>
<feature type="active site" description="Proton donor" evidence="9 11 12 13 14">
    <location>
        <position position="466"/>
    </location>
</feature>
<feature type="active site" description="Proton acceptor" evidence="9 11 12 13 14">
    <location>
        <position position="524"/>
    </location>
</feature>
<feature type="binding site" evidence="9">
    <location>
        <position position="9"/>
    </location>
    <ligand>
        <name>Mg(2+)</name>
        <dbReference type="ChEBI" id="CHEBI:18420"/>
    </ligand>
</feature>
<feature type="binding site" evidence="9">
    <location>
        <position position="11"/>
    </location>
    <ligand>
        <name>Mg(2+)</name>
        <dbReference type="ChEBI" id="CHEBI:18420"/>
    </ligand>
</feature>
<feature type="binding site" evidence="9">
    <location>
        <begin position="123"/>
        <end position="124"/>
    </location>
    <ligand>
        <name>phosphate</name>
        <dbReference type="ChEBI" id="CHEBI:43474"/>
    </ligand>
</feature>
<feature type="binding site" evidence="9">
    <location>
        <position position="185"/>
    </location>
    <ligand>
        <name>Mg(2+)</name>
        <dbReference type="ChEBI" id="CHEBI:18420"/>
    </ligand>
</feature>
<feature type="binding site" evidence="9 11 12 13 14">
    <location>
        <position position="383"/>
    </location>
    <ligand>
        <name>substrate</name>
    </ligand>
</feature>
<feature type="modified residue" description="N6-acetyllysine" evidence="29">
    <location>
        <position position="43"/>
    </location>
</feature>
<feature type="modified residue" description="N6-succinyllysine" evidence="1">
    <location>
        <position position="55"/>
    </location>
</feature>
<feature type="modified residue" description="N6-acetyllysine" evidence="1">
    <location>
        <position position="191"/>
    </location>
</feature>
<feature type="modified residue" description="N6-acetyllysine" evidence="1">
    <location>
        <position position="215"/>
    </location>
</feature>
<feature type="modified residue" description="Phosphoserine" evidence="1">
    <location>
        <position position="370"/>
    </location>
</feature>
<feature type="modified residue" description="N6-succinyllysine" evidence="1">
    <location>
        <position position="421"/>
    </location>
</feature>
<feature type="modified residue" description="N6-succinyllysine" evidence="1">
    <location>
        <position position="455"/>
    </location>
</feature>
<feature type="modified residue" description="N6-succinyllysine" evidence="1">
    <location>
        <position position="554"/>
    </location>
</feature>
<feature type="lipid moiety-binding region" description="S-(15-deoxy-Delta12,14-prostaglandin J2-9-yl)cysteine" evidence="26">
    <location>
        <position position="522"/>
    </location>
</feature>
<feature type="splice variant" id="VSP_045597" description="In isoform 3." evidence="22">
    <location>
        <begin position="1"/>
        <end position="66"/>
    </location>
</feature>
<feature type="splice variant" id="VSP_045598" description="In isoform 2." evidence="22">
    <location>
        <begin position="1"/>
        <end position="53"/>
    </location>
</feature>
<feature type="sequence variant" id="VAR_055392" description="In dbSNP:rs72473930." evidence="21">
    <original>G</original>
    <variation>A</variation>
    <location>
        <position position="21"/>
    </location>
</feature>
<feature type="sequence variant" id="VAR_055393" description="In dbSNP:rs72475803." evidence="21">
    <original>R</original>
    <variation>Q</variation>
    <location>
        <position position="52"/>
    </location>
</feature>
<feature type="sequence variant" id="VAR_051059" description="Decreased phosphatase activity; no effect on epoxyde hydrolase activity; dbSNP:rs41507953." evidence="7 10 21">
    <original>K</original>
    <variation>R</variation>
    <location>
        <position position="55"/>
    </location>
</feature>
<feature type="sequence variant" id="VAR_033991" description="Decreased phosphatase activity; no effect on epoxyde hydrolase activity; dbSNP:rs17057255." evidence="7 10 21">
    <original>R</original>
    <variation>C</variation>
    <location>
        <position position="103"/>
    </location>
</feature>
<feature type="sequence variant" id="VAR_055394" description="Decreased phosphatase activity; no effect on epoxyde hydrolase activity; dbSNP:rs57699806." evidence="7 10 21">
    <original>C</original>
    <variation>Y</variation>
    <location>
        <position position="154"/>
    </location>
</feature>
<feature type="sequence variant" id="VAR_055395" description="In dbSNP:rs72475821." evidence="21">
    <original>P</original>
    <variation>L</variation>
    <location>
        <position position="225"/>
    </location>
</feature>
<feature type="sequence variant" id="VAR_014852" description="No effect on phosphatase activity; decreased epoxyde hydrolase activity; dbSNP:rs751141." evidence="4 7 10 20 21">
    <original>R</original>
    <variation>Q</variation>
    <location>
        <position position="287"/>
    </location>
</feature>
<feature type="sequence variant" id="VAR_055396" description="In dbSNP:rs72475894." evidence="21">
    <original>M</original>
    <variation>V</variation>
    <location>
        <position position="369"/>
    </location>
</feature>
<feature type="sequence variant" id="VAR_022613" evidence="4 8">
    <original>R</original>
    <variation>RR</variation>
    <location>
        <position position="403"/>
    </location>
</feature>
<feature type="sequence variant" id="VAR_055397" description="No effect on phosphatase activity and epoxyde hydrolase activity; dbSNP:rs68053459." evidence="7 10 21">
    <original>E</original>
    <variation>G</variation>
    <location>
        <position position="470"/>
    </location>
</feature>
<feature type="mutagenesis site" description="Loss of phosphatase activity." evidence="5 17">
    <original>D</original>
    <variation>A</variation>
    <location>
        <position position="9"/>
    </location>
</feature>
<feature type="mutagenesis site" description="Loss of S-(15-deoxy-Delta12,14-prostaglandin J2-9-yl)cysteine-induced inhibition of epoxide hydrolase activity." evidence="15">
    <original>C</original>
    <variation>S</variation>
    <location>
        <position position="522"/>
    </location>
</feature>
<feature type="sequence conflict" description="In Ref. 1; AAA02756." evidence="25" ref="1">
    <original>A</original>
    <variation>G</variation>
    <location>
        <position position="5"/>
    </location>
</feature>
<feature type="sequence conflict" description="In Ref. 1; AAA02756." evidence="25" ref="1">
    <original>SG</original>
    <variation>W</variation>
    <location>
        <begin position="257"/>
        <end position="258"/>
    </location>
</feature>
<feature type="sequence conflict" description="In Ref. 5; BAG53362." evidence="25" ref="5">
    <original>F</original>
    <variation>L</variation>
    <location>
        <position position="409"/>
    </location>
</feature>
<feature type="sequence conflict" description="In Ref. 5; BAG53362." evidence="25" ref="5">
    <original>W</original>
    <variation>R</variation>
    <location>
        <position position="473"/>
    </location>
</feature>
<feature type="sequence conflict" description="In Ref. 5; BAG53362." evidence="25" ref="5">
    <original>E</original>
    <variation>G</variation>
    <location>
        <position position="494"/>
    </location>
</feature>
<feature type="strand" evidence="38">
    <location>
        <begin position="5"/>
        <end position="8"/>
    </location>
</feature>
<feature type="turn" evidence="38">
    <location>
        <begin position="12"/>
        <end position="14"/>
    </location>
</feature>
<feature type="strand" evidence="37">
    <location>
        <begin position="15"/>
        <end position="17"/>
    </location>
</feature>
<feature type="helix" evidence="38">
    <location>
        <begin position="19"/>
        <end position="29"/>
    </location>
</feature>
<feature type="helix" evidence="38">
    <location>
        <begin position="36"/>
        <end position="42"/>
    </location>
</feature>
<feature type="helix" evidence="38">
    <location>
        <begin position="45"/>
        <end position="47"/>
    </location>
</feature>
<feature type="helix" evidence="38">
    <location>
        <begin position="49"/>
        <end position="54"/>
    </location>
</feature>
<feature type="strand" evidence="34">
    <location>
        <begin position="57"/>
        <end position="59"/>
    </location>
</feature>
<feature type="helix" evidence="38">
    <location>
        <begin position="60"/>
        <end position="72"/>
    </location>
</feature>
<feature type="turn" evidence="33">
    <location>
        <begin position="77"/>
        <end position="79"/>
    </location>
</feature>
<feature type="helix" evidence="38">
    <location>
        <begin position="88"/>
        <end position="97"/>
    </location>
</feature>
<feature type="helix" evidence="38">
    <location>
        <begin position="103"/>
        <end position="114"/>
    </location>
</feature>
<feature type="strand" evidence="38">
    <location>
        <begin position="118"/>
        <end position="123"/>
    </location>
</feature>
<feature type="turn" evidence="37">
    <location>
        <begin position="131"/>
        <end position="133"/>
    </location>
</feature>
<feature type="helix" evidence="38">
    <location>
        <begin position="140"/>
        <end position="145"/>
    </location>
</feature>
<feature type="strand" evidence="38">
    <location>
        <begin position="147"/>
        <end position="152"/>
    </location>
</feature>
<feature type="helix" evidence="38">
    <location>
        <begin position="153"/>
        <end position="156"/>
    </location>
</feature>
<feature type="strand" evidence="35">
    <location>
        <begin position="160"/>
        <end position="162"/>
    </location>
</feature>
<feature type="helix" evidence="38">
    <location>
        <begin position="163"/>
        <end position="173"/>
    </location>
</feature>
<feature type="helix" evidence="38">
    <location>
        <begin position="177"/>
        <end position="179"/>
    </location>
</feature>
<feature type="strand" evidence="38">
    <location>
        <begin position="180"/>
        <end position="185"/>
    </location>
</feature>
<feature type="helix" evidence="38">
    <location>
        <begin position="187"/>
        <end position="195"/>
    </location>
</feature>
<feature type="strand" evidence="38">
    <location>
        <begin position="199"/>
        <end position="202"/>
    </location>
</feature>
<feature type="helix" evidence="38">
    <location>
        <begin position="206"/>
        <end position="217"/>
    </location>
</feature>
<feature type="helix" evidence="37">
    <location>
        <begin position="234"/>
        <end position="236"/>
    </location>
</feature>
<feature type="strand" evidence="37">
    <location>
        <begin position="237"/>
        <end position="245"/>
    </location>
</feature>
<feature type="strand" evidence="37">
    <location>
        <begin position="248"/>
        <end position="255"/>
    </location>
</feature>
<feature type="strand" evidence="37">
    <location>
        <begin position="257"/>
        <end position="264"/>
    </location>
</feature>
<feature type="helix" evidence="37">
    <location>
        <begin position="271"/>
        <end position="274"/>
    </location>
</feature>
<feature type="turn" evidence="37">
    <location>
        <begin position="275"/>
        <end position="277"/>
    </location>
</feature>
<feature type="helix" evidence="37">
    <location>
        <begin position="278"/>
        <end position="283"/>
    </location>
</feature>
<feature type="strand" evidence="37">
    <location>
        <begin position="287"/>
        <end position="291"/>
    </location>
</feature>
<feature type="helix" evidence="37">
    <location>
        <begin position="305"/>
        <end position="308"/>
    </location>
</feature>
<feature type="helix" evidence="37">
    <location>
        <begin position="310"/>
        <end position="324"/>
    </location>
</feature>
<feature type="strand" evidence="37">
    <location>
        <begin position="329"/>
        <end position="334"/>
    </location>
</feature>
<feature type="helix" evidence="37">
    <location>
        <begin position="336"/>
        <end position="347"/>
    </location>
</feature>
<feature type="helix" evidence="37">
    <location>
        <begin position="349"/>
        <end position="351"/>
    </location>
</feature>
<feature type="strand" evidence="37">
    <location>
        <begin position="352"/>
        <end position="359"/>
    </location>
</feature>
<feature type="strand" evidence="31">
    <location>
        <begin position="367"/>
        <end position="369"/>
    </location>
</feature>
<feature type="helix" evidence="37">
    <location>
        <begin position="371"/>
        <end position="376"/>
    </location>
</feature>
<feature type="helix" evidence="37">
    <location>
        <begin position="379"/>
        <end position="382"/>
    </location>
</feature>
<feature type="helix" evidence="37">
    <location>
        <begin position="383"/>
        <end position="386"/>
    </location>
</feature>
<feature type="helix" evidence="37">
    <location>
        <begin position="392"/>
        <end position="398"/>
    </location>
</feature>
<feature type="helix" evidence="37">
    <location>
        <begin position="401"/>
        <end position="408"/>
    </location>
</feature>
<feature type="helix" evidence="31">
    <location>
        <begin position="412"/>
        <end position="414"/>
    </location>
</feature>
<feature type="helix" evidence="30">
    <location>
        <begin position="419"/>
        <end position="421"/>
    </location>
</feature>
<feature type="turn" evidence="37">
    <location>
        <begin position="424"/>
        <end position="426"/>
    </location>
</feature>
<feature type="turn" evidence="37">
    <location>
        <begin position="428"/>
        <end position="431"/>
    </location>
</feature>
<feature type="strand" evidence="32">
    <location>
        <begin position="440"/>
        <end position="442"/>
    </location>
</feature>
<feature type="helix" evidence="37">
    <location>
        <begin position="444"/>
        <end position="455"/>
    </location>
</feature>
<feature type="turn" evidence="37">
    <location>
        <begin position="456"/>
        <end position="459"/>
    </location>
</feature>
<feature type="helix" evidence="37">
    <location>
        <begin position="460"/>
        <end position="464"/>
    </location>
</feature>
<feature type="turn" evidence="36">
    <location>
        <begin position="465"/>
        <end position="468"/>
    </location>
</feature>
<feature type="helix" evidence="37">
    <location>
        <begin position="469"/>
        <end position="477"/>
    </location>
</feature>
<feature type="turn" evidence="37">
    <location>
        <begin position="478"/>
        <end position="481"/>
    </location>
</feature>
<feature type="strand" evidence="37">
    <location>
        <begin position="488"/>
        <end position="493"/>
    </location>
</feature>
<feature type="strand" evidence="37">
    <location>
        <begin position="497"/>
        <end position="499"/>
    </location>
</feature>
<feature type="helix" evidence="37">
    <location>
        <begin position="501"/>
        <end position="504"/>
    </location>
</feature>
<feature type="helix" evidence="37">
    <location>
        <begin position="507"/>
        <end position="509"/>
    </location>
</feature>
<feature type="strand" evidence="37">
    <location>
        <begin position="515"/>
        <end position="519"/>
    </location>
</feature>
<feature type="helix" evidence="37">
    <location>
        <begin position="526"/>
        <end position="529"/>
    </location>
</feature>
<feature type="helix" evidence="37">
    <location>
        <begin position="531"/>
        <end position="545"/>
    </location>
</feature>
<comment type="function">
    <text evidence="2 5 6 7 16 19">Bifunctional enzyme (PubMed:12574510). The C-terminal domain has epoxide hydrolase activity and acts on epoxides (alkene oxides, oxiranes) and arene oxides (PubMed:12574510, PubMed:12869654, PubMed:22798687). Plays a role in xenobiotic metabolism by degrading potentially toxic epoxides (By similarity). Also determines steady-state levels of physiological mediators (PubMed:12574510, PubMed:12869654, PubMed:21217101, PubMed:22798687).</text>
</comment>
<comment type="function">
    <text evidence="6 17 18">Bifunctional enzyme (PubMed:12574510). The N-terminal domain has lipid phosphatase activity, with the highest activity towards threo-9,10-phosphonooxy-hydroxy-octadecanoic acid, followed by erythro-9,10-phosphonooxy-hydroxy-octadecanoic acid, 12-phosphonooxy-octadec-9Z-enoic acid and 12-phosphonooxy-octadec-9E-enoic acid (PubMed:12574510). Has phosphatase activity toward lyso-glycerophospholipids with also some lower activity toward lysolipids of sphingolipid and isoprenoid phosphates (PubMed:22217705, PubMed:22387545).</text>
</comment>
<comment type="catalytic activity">
    <reaction evidence="6 7 19">
        <text>an epoxide + H2O = an ethanediol</text>
        <dbReference type="Rhea" id="RHEA:19037"/>
        <dbReference type="ChEBI" id="CHEBI:15377"/>
        <dbReference type="ChEBI" id="CHEBI:32955"/>
        <dbReference type="ChEBI" id="CHEBI:140594"/>
        <dbReference type="EC" id="3.3.2.10"/>
    </reaction>
</comment>
<comment type="catalytic activity">
    <reaction evidence="5 6 10">
        <text>(9S,10S)-10-hydroxy-9-(phosphooxy)octadecanoate + H2O = (9S,10S)-9,10-dihydroxyoctadecanoate + phosphate</text>
        <dbReference type="Rhea" id="RHEA:16537"/>
        <dbReference type="ChEBI" id="CHEBI:15377"/>
        <dbReference type="ChEBI" id="CHEBI:43474"/>
        <dbReference type="ChEBI" id="CHEBI:58796"/>
        <dbReference type="ChEBI" id="CHEBI:58797"/>
        <dbReference type="EC" id="3.1.3.76"/>
    </reaction>
</comment>
<comment type="catalytic activity">
    <reaction evidence="6">
        <text>12-phosphooxy-(9Z)-octadecenoate + H2O = 12-hydroxy-(9Z)-octadecenoate + phosphate</text>
        <dbReference type="Rhea" id="RHEA:45272"/>
        <dbReference type="ChEBI" id="CHEBI:15377"/>
        <dbReference type="ChEBI" id="CHEBI:43474"/>
        <dbReference type="ChEBI" id="CHEBI:85141"/>
        <dbReference type="ChEBI" id="CHEBI:85150"/>
    </reaction>
    <physiologicalReaction direction="left-to-right" evidence="6">
        <dbReference type="Rhea" id="RHEA:45273"/>
    </physiologicalReaction>
</comment>
<comment type="catalytic activity">
    <reaction evidence="6">
        <text>12-phosphooxy-(9E)-octadecenoate + H2O = 12-hydroxy-(9E)-octadecenoate + phosphate</text>
        <dbReference type="Rhea" id="RHEA:45276"/>
        <dbReference type="ChEBI" id="CHEBI:15377"/>
        <dbReference type="ChEBI" id="CHEBI:43474"/>
        <dbReference type="ChEBI" id="CHEBI:85137"/>
        <dbReference type="ChEBI" id="CHEBI:85152"/>
    </reaction>
    <physiologicalReaction direction="left-to-right" evidence="6">
        <dbReference type="Rhea" id="RHEA:45277"/>
    </physiologicalReaction>
</comment>
<comment type="catalytic activity">
    <reaction evidence="6">
        <text>12-(phosphooxy)octadecanoate + H2O = 12-hydroxyoctadecanoate + phosphate</text>
        <dbReference type="Rhea" id="RHEA:45280"/>
        <dbReference type="ChEBI" id="CHEBI:15377"/>
        <dbReference type="ChEBI" id="CHEBI:43474"/>
        <dbReference type="ChEBI" id="CHEBI:84201"/>
        <dbReference type="ChEBI" id="CHEBI:85134"/>
    </reaction>
    <physiologicalReaction direction="left-to-right" evidence="6">
        <dbReference type="Rhea" id="RHEA:45281"/>
    </physiologicalReaction>
</comment>
<comment type="catalytic activity">
    <reaction evidence="19">
        <text>8,9-epoxy-(5Z,11Z,14Z)-eicosatrienoate + H2O = 8,9-dihydroxy-(5Z,11Z,14Z)-eicosatrienoate</text>
        <dbReference type="Rhea" id="RHEA:44048"/>
        <dbReference type="ChEBI" id="CHEBI:15377"/>
        <dbReference type="ChEBI" id="CHEBI:84025"/>
        <dbReference type="ChEBI" id="CHEBI:84032"/>
    </reaction>
    <physiologicalReaction direction="left-to-right" evidence="27">
        <dbReference type="Rhea" id="RHEA:44049"/>
    </physiologicalReaction>
</comment>
<comment type="catalytic activity">
    <reaction evidence="19">
        <text>11,12-epoxy-(5Z,8Z,14Z)-eicosatrienoate + H2O = 11,12-dihydroxy-(5Z,8Z,14Z)-eicosatrienoate</text>
        <dbReference type="Rhea" id="RHEA:44044"/>
        <dbReference type="ChEBI" id="CHEBI:15377"/>
        <dbReference type="ChEBI" id="CHEBI:76625"/>
        <dbReference type="ChEBI" id="CHEBI:84031"/>
    </reaction>
    <physiologicalReaction direction="left-to-right" evidence="27">
        <dbReference type="Rhea" id="RHEA:44045"/>
    </physiologicalReaction>
</comment>
<comment type="catalytic activity">
    <reaction evidence="19">
        <text>14,15-epoxy-(5Z,8Z,11Z)-eicosatrienoate + H2O = 14,15-dihydroxy-(5Z,8Z,11Z)-eicosatrienoate</text>
        <dbReference type="Rhea" id="RHEA:44040"/>
        <dbReference type="ChEBI" id="CHEBI:15377"/>
        <dbReference type="ChEBI" id="CHEBI:84024"/>
        <dbReference type="ChEBI" id="CHEBI:84029"/>
    </reaction>
    <physiologicalReaction direction="left-to-right" evidence="27">
        <dbReference type="Rhea" id="RHEA:44041"/>
    </physiologicalReaction>
</comment>
<comment type="catalytic activity">
    <reaction evidence="19">
        <text>9,10-epoxy-(12Z)-octadecenoate + H2O = 9,10-dihydroxy-(12Z)-octadecenoate</text>
        <dbReference type="Rhea" id="RHEA:44032"/>
        <dbReference type="ChEBI" id="CHEBI:15377"/>
        <dbReference type="ChEBI" id="CHEBI:84023"/>
        <dbReference type="ChEBI" id="CHEBI:84027"/>
    </reaction>
    <physiologicalReaction direction="left-to-right" evidence="27">
        <dbReference type="Rhea" id="RHEA:44033"/>
    </physiologicalReaction>
</comment>
<comment type="catalytic activity">
    <reaction evidence="16">
        <text>8-hydroxy-(11S,12S)-epoxy-(5Z,9E,14Z)-eicosatrienoate + H2O = (8,11R,12S)-trihydroxy-(5Z,9E,14Z)-eicosatrienoate</text>
        <dbReference type="Rhea" id="RHEA:50896"/>
        <dbReference type="ChEBI" id="CHEBI:15377"/>
        <dbReference type="ChEBI" id="CHEBI:78100"/>
        <dbReference type="ChEBI" id="CHEBI:132127"/>
    </reaction>
    <physiologicalReaction direction="left-to-right" evidence="16">
        <dbReference type="Rhea" id="RHEA:50897"/>
    </physiologicalReaction>
</comment>
<comment type="catalytic activity">
    <reaction evidence="16">
        <text>10-hydroxy-(11S,12S)-epoxy- (5Z,8Z,14Z)-eicosatrienoate + H2O = (10,11S,12R)-trihydroxy-(5Z,8Z,14Z)-eicosatrienoate</text>
        <dbReference type="Rhea" id="RHEA:50900"/>
        <dbReference type="ChEBI" id="CHEBI:15377"/>
        <dbReference type="ChEBI" id="CHEBI:78084"/>
        <dbReference type="ChEBI" id="CHEBI:78099"/>
    </reaction>
    <physiologicalReaction direction="left-to-right" evidence="16">
        <dbReference type="Rhea" id="RHEA:50901"/>
    </physiologicalReaction>
</comment>
<comment type="catalytic activity">
    <reaction evidence="18">
        <text>1-tetradecanoyl-sn-glycerol 3-phosphate + H2O = 1-tetradecanoyl-sn-glycerol + phosphate</text>
        <dbReference type="Rhea" id="RHEA:53592"/>
        <dbReference type="ChEBI" id="CHEBI:15377"/>
        <dbReference type="ChEBI" id="CHEBI:43474"/>
        <dbReference type="ChEBI" id="CHEBI:72683"/>
        <dbReference type="ChEBI" id="CHEBI:75536"/>
    </reaction>
    <physiologicalReaction direction="left-to-right" evidence="18">
        <dbReference type="Rhea" id="RHEA:53593"/>
    </physiologicalReaction>
</comment>
<comment type="catalytic activity">
    <reaction evidence="17 18">
        <text>1-octadecanoyl-sn-glycero-3-phosphate + H2O = 1-octadecanoyl-sn-glycerol + phosphate</text>
        <dbReference type="Rhea" id="RHEA:53596"/>
        <dbReference type="ChEBI" id="CHEBI:15377"/>
        <dbReference type="ChEBI" id="CHEBI:43474"/>
        <dbReference type="ChEBI" id="CHEBI:74565"/>
        <dbReference type="ChEBI" id="CHEBI:75550"/>
    </reaction>
    <physiologicalReaction direction="left-to-right" evidence="17 18">
        <dbReference type="Rhea" id="RHEA:53597"/>
    </physiologicalReaction>
</comment>
<comment type="catalytic activity">
    <reaction evidence="17 18">
        <text>1-(5Z,8Z,11Z,14Z-eicosatetraenoyl)-sn-glycero-3-phosphate + H2O = 1-(5Z,8Z,11Z,14Z-eicosatetraenoyl)-sn-glycerol + phosphate</text>
        <dbReference type="Rhea" id="RHEA:53600"/>
        <dbReference type="ChEBI" id="CHEBI:15377"/>
        <dbReference type="ChEBI" id="CHEBI:34071"/>
        <dbReference type="ChEBI" id="CHEBI:43474"/>
        <dbReference type="ChEBI" id="CHEBI:74938"/>
    </reaction>
    <physiologicalReaction direction="left-to-right" evidence="17 18">
        <dbReference type="Rhea" id="RHEA:53601"/>
    </physiologicalReaction>
</comment>
<comment type="catalytic activity">
    <reaction evidence="17 18">
        <text>1-hexadecanoyl-sn-glycero-3-phosphate + H2O = 1-hexadecanoyl-sn-glycerol + phosphate</text>
        <dbReference type="Rhea" id="RHEA:53604"/>
        <dbReference type="ChEBI" id="CHEBI:15377"/>
        <dbReference type="ChEBI" id="CHEBI:43474"/>
        <dbReference type="ChEBI" id="CHEBI:57518"/>
        <dbReference type="ChEBI" id="CHEBI:75542"/>
    </reaction>
    <physiologicalReaction direction="left-to-right" evidence="17 18">
        <dbReference type="Rhea" id="RHEA:53605"/>
    </physiologicalReaction>
</comment>
<comment type="catalytic activity">
    <reaction evidence="17 18">
        <text>1-(9Z-octadecenoyl)-sn-glycero-3-phosphate + H2O = 1-(9Z-octadecenoyl)-sn-glycerol + phosphate</text>
        <dbReference type="Rhea" id="RHEA:39835"/>
        <dbReference type="ChEBI" id="CHEBI:15377"/>
        <dbReference type="ChEBI" id="CHEBI:43474"/>
        <dbReference type="ChEBI" id="CHEBI:74544"/>
        <dbReference type="ChEBI" id="CHEBI:75757"/>
    </reaction>
    <physiologicalReaction direction="left-to-right" evidence="17 18">
        <dbReference type="Rhea" id="RHEA:39836"/>
    </physiologicalReaction>
</comment>
<comment type="catalytic activity">
    <reaction evidence="1">
        <text>(8S,9R)-epoxy-(5Z,11Z,14Z)-eicosatrienoate + H2O = (8S,9S)-dihydroxy-(5Z,11Z,14Z)-eicosatrienoate</text>
        <dbReference type="Rhea" id="RHEA:53972"/>
        <dbReference type="ChEBI" id="CHEBI:15377"/>
        <dbReference type="ChEBI" id="CHEBI:131974"/>
        <dbReference type="ChEBI" id="CHEBI:138002"/>
    </reaction>
    <physiologicalReaction direction="left-to-right" evidence="1">
        <dbReference type="Rhea" id="RHEA:53973"/>
    </physiologicalReaction>
</comment>
<comment type="catalytic activity">
    <reaction evidence="1">
        <text>(11S,12R)-epoxy-(5Z,8Z,14Z)-eicosatrienoate + H2O = (11R,12R)-dihydroxy-(5Z,8Z,14Z)-eicosatrienoate</text>
        <dbReference type="Rhea" id="RHEA:53980"/>
        <dbReference type="ChEBI" id="CHEBI:15377"/>
        <dbReference type="ChEBI" id="CHEBI:131969"/>
        <dbReference type="ChEBI" id="CHEBI:138004"/>
    </reaction>
    <physiologicalReaction direction="left-to-right" evidence="1">
        <dbReference type="Rhea" id="RHEA:53981"/>
    </physiologicalReaction>
</comment>
<comment type="catalytic activity">
    <reaction evidence="1">
        <text>(11S,12R)-epoxy-(5Z,8Z,14Z)-eicosatrienoate + H2O = (11S,12S)-dihydroxy-(5Z,8Z,14Z)-eicosatrienoate</text>
        <dbReference type="Rhea" id="RHEA:53984"/>
        <dbReference type="ChEBI" id="CHEBI:15377"/>
        <dbReference type="ChEBI" id="CHEBI:131969"/>
        <dbReference type="ChEBI" id="CHEBI:138005"/>
    </reaction>
    <physiologicalReaction direction="left-to-right" evidence="1">
        <dbReference type="Rhea" id="RHEA:53985"/>
    </physiologicalReaction>
</comment>
<comment type="catalytic activity">
    <reaction evidence="1">
        <text>(14S,15R)-epoxy-(5Z,8Z,11Z)-eicosatrienoate + H2O = (14R,15R)-dihydroxy-(5Z,8Z,11Z)-eicosatrienoate</text>
        <dbReference type="Rhea" id="RHEA:53992"/>
        <dbReference type="ChEBI" id="CHEBI:15377"/>
        <dbReference type="ChEBI" id="CHEBI:131964"/>
        <dbReference type="ChEBI" id="CHEBI:138003"/>
    </reaction>
    <physiologicalReaction direction="left-to-right" evidence="1">
        <dbReference type="Rhea" id="RHEA:53993"/>
    </physiologicalReaction>
</comment>
<comment type="catalytic activity">
    <reaction evidence="1">
        <text>(14S,15R)-epoxy-(5Z,8Z,11Z)-eicosatrienoate + H2O = (14S,15S)-dihydroxy-(5Z,8Z,11Z)-eicosatrienoate</text>
        <dbReference type="Rhea" id="RHEA:53996"/>
        <dbReference type="ChEBI" id="CHEBI:15377"/>
        <dbReference type="ChEBI" id="CHEBI:131964"/>
        <dbReference type="ChEBI" id="CHEBI:138006"/>
    </reaction>
    <physiologicalReaction direction="left-to-right" evidence="1">
        <dbReference type="Rhea" id="RHEA:53997"/>
    </physiologicalReaction>
</comment>
<comment type="catalytic activity">
    <reaction evidence="1">
        <text>(11R,12S)-epoxy-(5Z,8Z,14Z)-eicosatrienoate + H2O = (11S,12S)-dihydroxy-(5Z,8Z,14Z)-eicosatrienoate</text>
        <dbReference type="Rhea" id="RHEA:54004"/>
        <dbReference type="ChEBI" id="CHEBI:15377"/>
        <dbReference type="ChEBI" id="CHEBI:131970"/>
        <dbReference type="ChEBI" id="CHEBI:138005"/>
    </reaction>
    <physiologicalReaction direction="left-to-right" evidence="1">
        <dbReference type="Rhea" id="RHEA:54005"/>
    </physiologicalReaction>
</comment>
<comment type="catalytic activity">
    <reaction evidence="1">
        <text>(11R,12S)-epoxy-(5Z,8Z,14Z)-eicosatrienoate + H2O = (11R,12R)-dihydroxy-(5Z,8Z,14Z)-eicosatrienoate</text>
        <dbReference type="Rhea" id="RHEA:54000"/>
        <dbReference type="ChEBI" id="CHEBI:15377"/>
        <dbReference type="ChEBI" id="CHEBI:131970"/>
        <dbReference type="ChEBI" id="CHEBI:138004"/>
    </reaction>
    <physiologicalReaction direction="left-to-right" evidence="1">
        <dbReference type="Rhea" id="RHEA:54001"/>
    </physiologicalReaction>
</comment>
<comment type="catalytic activity">
    <reaction evidence="1">
        <text>(8S,9R)-epoxy-(5Z,11Z,14Z)-eicosatrienoate + H2O = (8R,9R)-dihydroxy-(5Z,11Z,14Z)-eicosatrienoate</text>
        <dbReference type="Rhea" id="RHEA:54016"/>
        <dbReference type="ChEBI" id="CHEBI:15377"/>
        <dbReference type="ChEBI" id="CHEBI:131974"/>
        <dbReference type="ChEBI" id="CHEBI:138008"/>
    </reaction>
    <physiologicalReaction direction="left-to-right" evidence="1">
        <dbReference type="Rhea" id="RHEA:54017"/>
    </physiologicalReaction>
</comment>
<comment type="catalytic activity">
    <reaction evidence="1">
        <text>(14R,15S)-epoxy-(5Z,8Z,11Z)-eicosatrienoate + H2O = (14R,15R)-dihydroxy-(5Z,8Z,11Z)-eicosatrienoate</text>
        <dbReference type="Rhea" id="RHEA:53976"/>
        <dbReference type="ChEBI" id="CHEBI:15377"/>
        <dbReference type="ChEBI" id="CHEBI:131965"/>
        <dbReference type="ChEBI" id="CHEBI:138003"/>
    </reaction>
    <physiologicalReaction direction="left-to-right" evidence="1">
        <dbReference type="Rhea" id="RHEA:53977"/>
    </physiologicalReaction>
</comment>
<comment type="cofactor">
    <cofactor evidence="6 9 11">
        <name>Mg(2+)</name>
        <dbReference type="ChEBI" id="CHEBI:18420"/>
    </cofactor>
</comment>
<comment type="activity regulation">
    <text evidence="16 17 18 19">Inhibited by 1-(1-acetylpiperidin-4-yl)-3-(4-(trifl uoromethoxy)phenyl)urea (TPAU), 1-cyclohexyl-3-dodecylurea (CDU), 12-(3-adamantan-1-yl-ureido)-dodecanoic acid (AUDA), 1-((3S, 5S, 7S)-adamantan-1-yl)-3-(5-(2-(2-ethoxyethoxy) ethoxy)pentyl)urea (AEPU), N-adamantyl-N[']-cyclohexyl urea (ACU), 4-(((1S, 4S)-4-(3-((3S, 5S, 7S)-adamantan-1-yl) ureido)cyclohexyl)oxy)benzoic acid (c-AUCB), 4-(((1R, 4R)-4-(3-((3S, 5S, 7S)-adamantan-1-yl)ureido)cyclohexyl)oxy)benzoic acid (t-AUCB), 4-(((1R, 4R)-4-(3-(4(trifluoromethoxy)phenyl)ureido)cyclohexyl)oxy)benzoic acid (t-TAUCB) and to a lesser extent by 8-(3-((3S, 5S, 7S)-adamantan-1-yl)ureido) octanoic acid (AUOA). Phosphatase activity is inhibited by dodecyl-phosphate, phospholipids such as phospho-lysophosphatidic acids and fatty acids such as palmitic acid and lauric acid (PubMed:22217705, PubMed:22387545).</text>
</comment>
<comment type="biophysicochemical properties">
    <kinetics>
        <KM evidence="5 6 10">21 uM for threo-9,10-phosphonooxy-hydroxy-octadecanoic acid</KM>
        <KM evidence="19">1.7 uM for 8,9-EET</KM>
        <KM evidence="19">3.4 uM for 11,12-EET</KM>
        <KM evidence="19">15 uM for 14,15-EET</KM>
        <KM evidence="19">1.5 uM for leukotoxin</KM>
        <KM evidence="5 6 10">1.1 mM for p-nitrophenyl phosphate</KM>
        <KM evidence="16">7.3 uM for 8-hydroxy-(11S,12S)-epoxy-(5Z,9E,14Z)-eicosatrienoate</KM>
        <KM evidence="16">10.8 uM for 10-hydroxy-(11S,12S)-epoxy- (5Z,8Z,14Z)-eicosatrienoate</KM>
        <KM evidence="17">3 uM for palmitoyl-lysophosphatidic acid</KM>
        <KM evidence="17">6.4 uM for stearoyl-lysophosphatidic acid</KM>
        <KM evidence="17">6.2 uM for oleoyl-lysophosphatidic acid</KM>
        <KM evidence="17">5.9 uM for arachidonoyl-lysophosphatidic acid</KM>
        <KM evidence="17">5.3 uM for arachidoyl-lysophosphatidic acid</KM>
        <KM evidence="17">23.5 uM for 1-alkyl lysophosphatidic acid (C18:0)</KM>
        <KM evidence="17">14.8 uM for sphingosine-1-phosphate</KM>
        <KM evidence="17">20.9 uM for geranylgeranyl pyrophosphate</KM>
        <KM evidence="18">10 uM for farnesyl pyro-phosphate</KM>
        <KM evidence="18">5.1 uM for 1-myristoyl-2-hydroxy-3-glycerophosphate</KM>
        <KM evidence="18">23 uM for 1-palmityl-2-hydroxy-3-glycerophosphate</KM>
        <KM evidence="18">4.2 uM for 1-stearyl-2-hydroxy-3-glycerophosphate</KM>
        <KM evidence="18">6.9 uM for 1-oleoyl-2-hydroxy-3-glycerophosphate</KM>
        <KM evidence="18">13 uM for 1-arachidonoyl-2-hydroxy-3-glycerophosphate</KM>
        <KM evidence="18">31 uM for sphingosine-1-phosphate</KM>
        <KM evidence="18">67 uM for N-acetyl-ceramide-phosphate</KM>
        <Vmax evidence="5 6 10">338.0 nmol/min/mg enzyme with threo-9,10-phosphonooxy-hydroxy-octadecanoic acid</Vmax>
        <Vmax evidence="19">0.9 umol/min/mg enzyme with 8,9-EET as substrate</Vmax>
        <Vmax evidence="19">4.5 umol/min/mg enzyme with 11,12-EET as substrate</Vmax>
        <Vmax evidence="19">7.0 umol/min/mg enzyme with 14,15-EET as substrate</Vmax>
        <Vmax evidence="19">0.55 umol/min/mg enzyme with leukotoxin as substrate</Vmax>
        <Vmax evidence="5 6 10">5.8 nmol/min/mg enzyme with p-nitrophenyl phosphate</Vmax>
        <Vmax evidence="16">385.0 nmol/min/mg enzyme with 8-hydroxy-(11S,12S)-epoxy-(5Z,9E,14Z)-eicosatrienoate as substrate</Vmax>
        <Vmax evidence="16">95.0 nmol/min/mg enzyme with 10-hydroxy-(11S,12S)-epoxy- (5Z,8Z,14Z)-eicosatrienoate as substrate</Vmax>
        <Vmax evidence="17">150.4 nmol/min/mg enzyme with palmitoyl-lysophosphatidic acid as substrate</Vmax>
        <Vmax evidence="17">193.5 nmol/min/mg enzyme with stearoyl-lysophosphatidic acid as substrate</Vmax>
        <Vmax evidence="17">191.6 nmol/min/mg enzyme with oleoyl-lysophosphatidic acid as substrate</Vmax>
        <Vmax evidence="17">157.9 nmol/min/mg enzyme with arachidonoyl-lysophosphatidic acid as substrate</Vmax>
        <Vmax evidence="17">26.8 nmol/min/mg enzyme with arachidoyl-lysophosphatidic acid as substrate</Vmax>
        <Vmax evidence="17">171.1 nmol/min/mg enzyme with 1-alkyl lysophosphatidic acid (C18:0) as substrate</Vmax>
        <Vmax evidence="17">60.6 nmol/min/mg enzyme with sphingosine-1-phosphate as substrate</Vmax>
        <Vmax evidence="17">101.3 nmol/min/mg enzyme with geranylgeranyl pyrophosphate as substrate</Vmax>
        <text evidence="18">kcat are 14 sec(-1), 354 sec(-1), 167 sec(-1), 125 sec(-1), 177 sec(-1), 250 sec(-1), 18 sec(-1) and 136 sec(-1) for farnesyl pyro-phosphate, 1-myristoyl-2-hydroxy-3-glycerophosphate, 1-palmityl-2-hydroxy-3-glycerophosphate, 1-stearyl-2-hydroxy-3-glycerophosphate, 1-oleoyl-2-hydroxy-3-glycerophosphate, 1-arachidonoyl-2-hydroxy-3-glycerophosphate, sphingosine-1-phosphate and N-acetyl-ceramide-phosphate, respectively.</text>
    </kinetics>
</comment>
<comment type="subunit">
    <text evidence="9 13 14">Homodimer.</text>
</comment>
<comment type="subcellular location">
    <subcellularLocation>
        <location>Cytoplasm</location>
    </subcellularLocation>
    <subcellularLocation>
        <location>Peroxisome</location>
    </subcellularLocation>
</comment>
<comment type="alternative products">
    <event type="alternative splicing"/>
    <isoform>
        <id>P34913-1</id>
        <name>1</name>
        <sequence type="displayed"/>
    </isoform>
    <isoform>
        <id>P34913-2</id>
        <name>2</name>
        <sequence type="described" ref="VSP_045598"/>
    </isoform>
    <isoform>
        <id>P34913-3</id>
        <name>3</name>
        <sequence type="described" ref="VSP_045597"/>
    </isoform>
</comment>
<comment type="induction">
    <text>By compounds that cause peroxisome proliferation such as clofibrate, tiadenol and fenofibrate.</text>
</comment>
<comment type="domain">
    <text>The N-terminal domain has phosphatase activity. The C-terminal domain has epoxide hydrolase activity.</text>
</comment>
<comment type="PTM">
    <text>The N-terminus is blocked.</text>
</comment>
<comment type="PTM">
    <text evidence="25">The covalent modification of cysteine by 15-deoxy-Delta12,14-prostaglandin-J2 is autocatalytic and reversible. It may occur as an alternative to other cysteine modifications, such as S-nitrosylation and S-palmitoylation (Probable).</text>
</comment>
<comment type="similarity">
    <text evidence="25">Belongs to the AB hydrolase superfamily. Epoxide hydrolase family.</text>
</comment>
<sequence length="555" mass="62616">MTLRAAVFDLDGVLALPAVFGVLGRTEEALALPRGLLNDAFQKGGPEGATTRLMKGEITLSQWIPLMEENCRKCSETAKVCLPKNFSIKEIFDKAISARKINRPMLQAALMLRKKGFTTAILTNTWLDDRAERDGLAQLMCELKMHFDFLIESCQVGMVKPEPQIYKFLLDTLKASPSEVVFLDDIGANLKPARDLGMVTILVQDTDTALKELEKVTGIQLLNTPAPLPTSCNPSDMSHGYVTVKPRVRLHFVELGSGPAVCLCHGFPESWYSWRYQIPALAQAGYRVLAMDMKGYGESSAPPEIEEYCMEVLCKEMVTFLDKLGLSQAVFIGHDWGGMLVWYMALFYPERVRAVASLNTPFIPANPNMSPLESIKANPVFDYQLYFQEPGVAEAELEQNLSRTFKSLFRASDESVLSMHKVCEAGGLFVNSPEEPSLSRMVTEEEIQFYVQQFKKSGFRGPLNWYRNMERNWKWACKSLGRKILIPALMVTAEKDFVLVPQMSQHMEDWIPHLKRGHIEDCGHWTQMDKPTEVNQILIKWLDSDARNPPVVSKM</sequence>
<reference key="1">
    <citation type="journal article" date="1993" name="Arch. Biochem. Biophys.">
        <title>cDNA cloning and expression of a soluble epoxide hydrolase from human liver.</title>
        <authorList>
            <person name="Beetham J.K."/>
            <person name="Tian T."/>
            <person name="Hammock B.D."/>
        </authorList>
    </citation>
    <scope>NUCLEOTIDE SEQUENCE [GENOMIC DNA / MRNA] (ISOFORM 1)</scope>
    <scope>PARTIAL PROTEIN SEQUENCE</scope>
    <scope>VARIANT GLN-287</scope>
    <source>
        <tissue>Liver</tissue>
    </source>
</reference>
<reference key="2">
    <citation type="journal article" date="1996" name="Biochem. Biophys. Res. Commun.">
        <title>Structural characterization of the human soluble epoxide hydrolase gene (EPHX2).</title>
        <authorList>
            <person name="Sandberg M."/>
            <person name="Meijer J."/>
        </authorList>
    </citation>
    <scope>NUCLEOTIDE SEQUENCE [GENOMIC DNA]</scope>
    <source>
        <tissue>Placenta</tissue>
    </source>
</reference>
<reference key="3">
    <citation type="journal article" date="2000" name="J. Biol. Chem.">
        <title>Identification and functional characterization of human soluble epoxide hydrolase genetic polymorphisms.</title>
        <authorList>
            <person name="Sandberg M."/>
            <person name="Hassett C."/>
            <person name="Adman E.T."/>
            <person name="Meijer J."/>
            <person name="Omiecinski C.J."/>
        </authorList>
    </citation>
    <scope>NUCLEOTIDE SEQUENCE [MRNA] (ISOFORM 1)</scope>
    <scope>VARIANTS GLN-287 AND ARG-403 INS</scope>
    <source>
        <tissue>Liver</tissue>
    </source>
</reference>
<reference key="4">
    <citation type="submission" date="2003-05" db="EMBL/GenBank/DDBJ databases">
        <title>Cloning of human full-length CDSs in BD Creator(TM) system donor vector.</title>
        <authorList>
            <person name="Kalnine N."/>
            <person name="Chen X."/>
            <person name="Rolfs A."/>
            <person name="Halleck A."/>
            <person name="Hines L."/>
            <person name="Eisenstein S."/>
            <person name="Koundinya M."/>
            <person name="Raphael J."/>
            <person name="Moreira D."/>
            <person name="Kelley T."/>
            <person name="LaBaer J."/>
            <person name="Lin Y."/>
            <person name="Phelan M."/>
            <person name="Farmer A."/>
        </authorList>
    </citation>
    <scope>NUCLEOTIDE SEQUENCE [LARGE SCALE MRNA] (ISOFORM 1)</scope>
</reference>
<reference key="5">
    <citation type="journal article" date="2004" name="Nat. Genet.">
        <title>Complete sequencing and characterization of 21,243 full-length human cDNAs.</title>
        <authorList>
            <person name="Ota T."/>
            <person name="Suzuki Y."/>
            <person name="Nishikawa T."/>
            <person name="Otsuki T."/>
            <person name="Sugiyama T."/>
            <person name="Irie R."/>
            <person name="Wakamatsu A."/>
            <person name="Hayashi K."/>
            <person name="Sato H."/>
            <person name="Nagai K."/>
            <person name="Kimura K."/>
            <person name="Makita H."/>
            <person name="Sekine M."/>
            <person name="Obayashi M."/>
            <person name="Nishi T."/>
            <person name="Shibahara T."/>
            <person name="Tanaka T."/>
            <person name="Ishii S."/>
            <person name="Yamamoto J."/>
            <person name="Saito K."/>
            <person name="Kawai Y."/>
            <person name="Isono Y."/>
            <person name="Nakamura Y."/>
            <person name="Nagahari K."/>
            <person name="Murakami K."/>
            <person name="Yasuda T."/>
            <person name="Iwayanagi T."/>
            <person name="Wagatsuma M."/>
            <person name="Shiratori A."/>
            <person name="Sudo H."/>
            <person name="Hosoiri T."/>
            <person name="Kaku Y."/>
            <person name="Kodaira H."/>
            <person name="Kondo H."/>
            <person name="Sugawara M."/>
            <person name="Takahashi M."/>
            <person name="Kanda K."/>
            <person name="Yokoi T."/>
            <person name="Furuya T."/>
            <person name="Kikkawa E."/>
            <person name="Omura Y."/>
            <person name="Abe K."/>
            <person name="Kamihara K."/>
            <person name="Katsuta N."/>
            <person name="Sato K."/>
            <person name="Tanikawa M."/>
            <person name="Yamazaki M."/>
            <person name="Ninomiya K."/>
            <person name="Ishibashi T."/>
            <person name="Yamashita H."/>
            <person name="Murakawa K."/>
            <person name="Fujimori K."/>
            <person name="Tanai H."/>
            <person name="Kimata M."/>
            <person name="Watanabe M."/>
            <person name="Hiraoka S."/>
            <person name="Chiba Y."/>
            <person name="Ishida S."/>
            <person name="Ono Y."/>
            <person name="Takiguchi S."/>
            <person name="Watanabe S."/>
            <person name="Yosida M."/>
            <person name="Hotuta T."/>
            <person name="Kusano J."/>
            <person name="Kanehori K."/>
            <person name="Takahashi-Fujii A."/>
            <person name="Hara H."/>
            <person name="Tanase T.-O."/>
            <person name="Nomura Y."/>
            <person name="Togiya S."/>
            <person name="Komai F."/>
            <person name="Hara R."/>
            <person name="Takeuchi K."/>
            <person name="Arita M."/>
            <person name="Imose N."/>
            <person name="Musashino K."/>
            <person name="Yuuki H."/>
            <person name="Oshima A."/>
            <person name="Sasaki N."/>
            <person name="Aotsuka S."/>
            <person name="Yoshikawa Y."/>
            <person name="Matsunawa H."/>
            <person name="Ichihara T."/>
            <person name="Shiohata N."/>
            <person name="Sano S."/>
            <person name="Moriya S."/>
            <person name="Momiyama H."/>
            <person name="Satoh N."/>
            <person name="Takami S."/>
            <person name="Terashima Y."/>
            <person name="Suzuki O."/>
            <person name="Nakagawa S."/>
            <person name="Senoh A."/>
            <person name="Mizoguchi H."/>
            <person name="Goto Y."/>
            <person name="Shimizu F."/>
            <person name="Wakebe H."/>
            <person name="Hishigaki H."/>
            <person name="Watanabe T."/>
            <person name="Sugiyama A."/>
            <person name="Takemoto M."/>
            <person name="Kawakami B."/>
            <person name="Yamazaki M."/>
            <person name="Watanabe K."/>
            <person name="Kumagai A."/>
            <person name="Itakura S."/>
            <person name="Fukuzumi Y."/>
            <person name="Fujimori Y."/>
            <person name="Komiyama M."/>
            <person name="Tashiro H."/>
            <person name="Tanigami A."/>
            <person name="Fujiwara T."/>
            <person name="Ono T."/>
            <person name="Yamada K."/>
            <person name="Fujii Y."/>
            <person name="Ozaki K."/>
            <person name="Hirao M."/>
            <person name="Ohmori Y."/>
            <person name="Kawabata A."/>
            <person name="Hikiji T."/>
            <person name="Kobatake N."/>
            <person name="Inagaki H."/>
            <person name="Ikema Y."/>
            <person name="Okamoto S."/>
            <person name="Okitani R."/>
            <person name="Kawakami T."/>
            <person name="Noguchi S."/>
            <person name="Itoh T."/>
            <person name="Shigeta K."/>
            <person name="Senba T."/>
            <person name="Matsumura K."/>
            <person name="Nakajima Y."/>
            <person name="Mizuno T."/>
            <person name="Morinaga M."/>
            <person name="Sasaki M."/>
            <person name="Togashi T."/>
            <person name="Oyama M."/>
            <person name="Hata H."/>
            <person name="Watanabe M."/>
            <person name="Komatsu T."/>
            <person name="Mizushima-Sugano J."/>
            <person name="Satoh T."/>
            <person name="Shirai Y."/>
            <person name="Takahashi Y."/>
            <person name="Nakagawa K."/>
            <person name="Okumura K."/>
            <person name="Nagase T."/>
            <person name="Nomura N."/>
            <person name="Kikuchi H."/>
            <person name="Masuho Y."/>
            <person name="Yamashita R."/>
            <person name="Nakai K."/>
            <person name="Yada T."/>
            <person name="Nakamura Y."/>
            <person name="Ohara O."/>
            <person name="Isogai T."/>
            <person name="Sugano S."/>
        </authorList>
    </citation>
    <scope>NUCLEOTIDE SEQUENCE [LARGE SCALE MRNA] (ISOFORMS 2 AND 3)</scope>
    <scope>VARIANT ARG-403 INS</scope>
    <source>
        <tissue>Kidney</tissue>
        <tissue>Prostate</tissue>
    </source>
</reference>
<reference key="6">
    <citation type="submission" date="2008-03" db="EMBL/GenBank/DDBJ databases">
        <authorList>
            <consortium name="NIEHS SNPs program"/>
        </authorList>
    </citation>
    <scope>NUCLEOTIDE SEQUENCE [GENOMIC DNA]</scope>
    <scope>VARIANTS ALA-21; GLN-52; ARG-55; CYS-103; TYR-154; LEU-225; GLN-287; VAL-369 AND GLY-470</scope>
</reference>
<reference key="7">
    <citation type="journal article" date="2006" name="Nature">
        <title>DNA sequence and analysis of human chromosome 8.</title>
        <authorList>
            <person name="Nusbaum C."/>
            <person name="Mikkelsen T.S."/>
            <person name="Zody M.C."/>
            <person name="Asakawa S."/>
            <person name="Taudien S."/>
            <person name="Garber M."/>
            <person name="Kodira C.D."/>
            <person name="Schueler M.G."/>
            <person name="Shimizu A."/>
            <person name="Whittaker C.A."/>
            <person name="Chang J.L."/>
            <person name="Cuomo C.A."/>
            <person name="Dewar K."/>
            <person name="FitzGerald M.G."/>
            <person name="Yang X."/>
            <person name="Allen N.R."/>
            <person name="Anderson S."/>
            <person name="Asakawa T."/>
            <person name="Blechschmidt K."/>
            <person name="Bloom T."/>
            <person name="Borowsky M.L."/>
            <person name="Butler J."/>
            <person name="Cook A."/>
            <person name="Corum B."/>
            <person name="DeArellano K."/>
            <person name="DeCaprio D."/>
            <person name="Dooley K.T."/>
            <person name="Dorris L. III"/>
            <person name="Engels R."/>
            <person name="Gloeckner G."/>
            <person name="Hafez N."/>
            <person name="Hagopian D.S."/>
            <person name="Hall J.L."/>
            <person name="Ishikawa S.K."/>
            <person name="Jaffe D.B."/>
            <person name="Kamat A."/>
            <person name="Kudoh J."/>
            <person name="Lehmann R."/>
            <person name="Lokitsang T."/>
            <person name="Macdonald P."/>
            <person name="Major J.E."/>
            <person name="Matthews C.D."/>
            <person name="Mauceli E."/>
            <person name="Menzel U."/>
            <person name="Mihalev A.H."/>
            <person name="Minoshima S."/>
            <person name="Murayama Y."/>
            <person name="Naylor J.W."/>
            <person name="Nicol R."/>
            <person name="Nguyen C."/>
            <person name="O'Leary S.B."/>
            <person name="O'Neill K."/>
            <person name="Parker S.C.J."/>
            <person name="Polley A."/>
            <person name="Raymond C.K."/>
            <person name="Reichwald K."/>
            <person name="Rodriguez J."/>
            <person name="Sasaki T."/>
            <person name="Schilhabel M."/>
            <person name="Siddiqui R."/>
            <person name="Smith C.L."/>
            <person name="Sneddon T.P."/>
            <person name="Talamas J.A."/>
            <person name="Tenzin P."/>
            <person name="Topham K."/>
            <person name="Venkataraman V."/>
            <person name="Wen G."/>
            <person name="Yamazaki S."/>
            <person name="Young S.K."/>
            <person name="Zeng Q."/>
            <person name="Zimmer A.R."/>
            <person name="Rosenthal A."/>
            <person name="Birren B.W."/>
            <person name="Platzer M."/>
            <person name="Shimizu N."/>
            <person name="Lander E.S."/>
        </authorList>
    </citation>
    <scope>NUCLEOTIDE SEQUENCE [LARGE SCALE GENOMIC DNA]</scope>
</reference>
<reference key="8">
    <citation type="submission" date="2005-09" db="EMBL/GenBank/DDBJ databases">
        <authorList>
            <person name="Mural R.J."/>
            <person name="Istrail S."/>
            <person name="Sutton G.G."/>
            <person name="Florea L."/>
            <person name="Halpern A.L."/>
            <person name="Mobarry C.M."/>
            <person name="Lippert R."/>
            <person name="Walenz B."/>
            <person name="Shatkay H."/>
            <person name="Dew I."/>
            <person name="Miller J.R."/>
            <person name="Flanigan M.J."/>
            <person name="Edwards N.J."/>
            <person name="Bolanos R."/>
            <person name="Fasulo D."/>
            <person name="Halldorsson B.V."/>
            <person name="Hannenhalli S."/>
            <person name="Turner R."/>
            <person name="Yooseph S."/>
            <person name="Lu F."/>
            <person name="Nusskern D.R."/>
            <person name="Shue B.C."/>
            <person name="Zheng X.H."/>
            <person name="Zhong F."/>
            <person name="Delcher A.L."/>
            <person name="Huson D.H."/>
            <person name="Kravitz S.A."/>
            <person name="Mouchard L."/>
            <person name="Reinert K."/>
            <person name="Remington K.A."/>
            <person name="Clark A.G."/>
            <person name="Waterman M.S."/>
            <person name="Eichler E.E."/>
            <person name="Adams M.D."/>
            <person name="Hunkapiller M.W."/>
            <person name="Myers E.W."/>
            <person name="Venter J.C."/>
        </authorList>
    </citation>
    <scope>NUCLEOTIDE SEQUENCE [LARGE SCALE GENOMIC DNA]</scope>
</reference>
<reference key="9">
    <citation type="journal article" date="2004" name="Genome Res.">
        <title>The status, quality, and expansion of the NIH full-length cDNA project: the Mammalian Gene Collection (MGC).</title>
        <authorList>
            <consortium name="The MGC Project Team"/>
        </authorList>
    </citation>
    <scope>NUCLEOTIDE SEQUENCE [LARGE SCALE MRNA] (ISOFORM 1)</scope>
    <source>
        <tissue>B-cell</tissue>
        <tissue>Lung</tissue>
    </source>
</reference>
<reference key="10">
    <citation type="journal article" date="2003" name="Mol. Pharmacol.">
        <title>Polymorphisms in human soluble epoxide hydrolase.</title>
        <authorList>
            <person name="Przybyla-Zawislak B.D."/>
            <person name="Srivastava P.K."/>
            <person name="Vazquez-Matias J."/>
            <person name="Mohrenweiser H.W."/>
            <person name="Maxwell J.E."/>
            <person name="Hammock B.D."/>
            <person name="Bradbury J.A."/>
            <person name="Enayetallah A.E."/>
            <person name="Zeldin D.C."/>
            <person name="Grant D.F."/>
        </authorList>
    </citation>
    <scope>FUNCTION</scope>
    <scope>CATALYTIC ACTIVITY</scope>
    <scope>CHARACTERIZATION OF VARIANTS ARG-55; CYS-103; TYR-154; GLN-287 AND GLY-470</scope>
</reference>
<reference key="11">
    <citation type="journal article" date="2003" name="Proc. Natl. Acad. Sci. U.S.A.">
        <title>The N-terminal domain of mammalian soluble epoxide hydrolase is a phosphatase.</title>
        <authorList>
            <person name="Cronin A."/>
            <person name="Mowbray S."/>
            <person name="Durk H."/>
            <person name="Homburg S."/>
            <person name="Fleming I."/>
            <person name="Fisslthaler B."/>
            <person name="Oesch F."/>
            <person name="Arand M."/>
        </authorList>
    </citation>
    <scope>CATALYTIC ACTIVITY</scope>
    <scope>BIOPHYSICOCHEMICAL PROPERTIES</scope>
    <scope>FUNCTION AS PHOSPHATASE</scope>
    <scope>MUTAGENESIS OF ASP-9</scope>
</reference>
<reference key="12">
    <citation type="journal article" date="2003" name="Proc. Natl. Acad. Sci. U.S.A.">
        <title>The soluble epoxide hydrolase encoded by EPXH2 is a bifunctional enzyme with novel lipid phosphate phosphatase activity.</title>
        <authorList>
            <person name="Newman J.W."/>
            <person name="Morisseau C."/>
            <person name="Harris T.R."/>
            <person name="Hammock B.D."/>
        </authorList>
    </citation>
    <scope>FUNCTION</scope>
    <scope>CATALYTIC ACTIVITY</scope>
    <scope>FUNCTION AS LIPID PHOSPHATASE</scope>
    <scope>COFACTOR</scope>
    <scope>BIOPHYSICOCHEMICAL PROPERTIES</scope>
</reference>
<reference key="13">
    <citation type="journal article" date="2004" name="Arch. Biochem. Biophys.">
        <title>Polymorphisms in human soluble epoxide hydrolase: effects on enzyme activity, enzyme stability, and quaternary structure.</title>
        <authorList>
            <person name="Srivastava P.K."/>
            <person name="Sharma V.K."/>
            <person name="Kalonia D.S."/>
            <person name="Grant D.F."/>
        </authorList>
    </citation>
    <scope>CATALYTIC ACTIVITY</scope>
    <scope>BIOPHYSICOCHEMICAL PROPERTIES</scope>
    <scope>CHARACTERIZATION OF VARIANTS ARG-55; CYS-103; TYR-154; GLN-287 AND GLY-470</scope>
</reference>
<reference key="14">
    <citation type="journal article" date="2009" name="Science">
        <title>Lysine acetylation targets protein complexes and co-regulates major cellular functions.</title>
        <authorList>
            <person name="Choudhary C."/>
            <person name="Kumar C."/>
            <person name="Gnad F."/>
            <person name="Nielsen M.L."/>
            <person name="Rehman M."/>
            <person name="Walther T.C."/>
            <person name="Olsen J.V."/>
            <person name="Mann M."/>
        </authorList>
    </citation>
    <scope>ACETYLATION [LARGE SCALE ANALYSIS] AT LYS-43</scope>
    <scope>IDENTIFICATION BY MASS SPECTROMETRY [LARGE SCALE ANALYSIS]</scope>
</reference>
<reference key="15">
    <citation type="journal article" date="2011" name="BMC Syst. Biol.">
        <title>Initial characterization of the human central proteome.</title>
        <authorList>
            <person name="Burkard T.R."/>
            <person name="Planyavsky M."/>
            <person name="Kaupe I."/>
            <person name="Breitwieser F.P."/>
            <person name="Buerckstuemmer T."/>
            <person name="Bennett K.L."/>
            <person name="Superti-Furga G."/>
            <person name="Colinge J."/>
        </authorList>
    </citation>
    <scope>IDENTIFICATION BY MASS SPECTROMETRY [LARGE SCALE ANALYSIS]</scope>
</reference>
<reference key="16">
    <citation type="journal article" date="2011" name="Circ. Res.">
        <title>Redox regulation of soluble epoxide hydrolase by 15-deoxy-delta-prostaglandin J2 controls coronary hypoxic vasodilation.</title>
        <authorList>
            <person name="Charles R.L."/>
            <person name="Burgoyne J.R."/>
            <person name="Mayr M."/>
            <person name="Weldon S.M."/>
            <person name="Hubner N."/>
            <person name="Dong H."/>
            <person name="Morisseau C."/>
            <person name="Hammock B.D."/>
            <person name="Landar A."/>
            <person name="Eaton P."/>
        </authorList>
    </citation>
    <scope>LIPIDATION AT CYS-522</scope>
    <scope>MUTAGENESIS OF CYS-522</scope>
</reference>
<reference key="17">
    <citation type="journal article" date="2011" name="J. Lipid Res.">
        <title>Mammalian soluble epoxide hydrolase is identical to liver hepoxilin hydrolase.</title>
        <authorList>
            <person name="Cronin A."/>
            <person name="Decker M."/>
            <person name="Arand M."/>
        </authorList>
    </citation>
    <scope>FUNCTION</scope>
    <scope>CATALYTIC ACTIVITY</scope>
    <scope>BIOPHYSICOCHEMICAL PROPERTIES</scope>
    <scope>ACTIVITY REGULATION</scope>
</reference>
<reference key="18">
    <citation type="journal article" date="2012" name="Biochem. Biophys. Res. Commun.">
        <title>Role of soluble epoxide hydrolase phosphatase activity in the metabolism of lysophosphatidic acids.</title>
        <authorList>
            <person name="Morisseau C."/>
            <person name="Schebb N.H."/>
            <person name="Dong H."/>
            <person name="Ulu A."/>
            <person name="Aronov P.A."/>
            <person name="Hammock B.D."/>
        </authorList>
    </citation>
    <scope>FUNCTION</scope>
    <scope>CATALYTIC ACTIVITY</scope>
    <scope>ACTIVITY REGULATION</scope>
    <scope>BIOPHYSICOCHEMICAL PROPERTIES</scope>
</reference>
<reference key="19">
    <citation type="journal article" date="2012" name="J. Lipid Res.">
        <title>Lysophosphatidic acids are new substrates for the phosphatase domain of soluble epoxide hydrolase.</title>
        <authorList>
            <person name="Oguro A."/>
            <person name="Imaoka S."/>
        </authorList>
    </citation>
    <scope>FUNCTION</scope>
    <scope>CATALYTIC ACTIVITY</scope>
    <scope>BIOPHYSICOCHEMICAL PROPERTIES</scope>
    <scope>ACTIVITY REGULATION</scope>
    <scope>MUTAGENESIS OF ASP-9</scope>
</reference>
<reference key="20">
    <citation type="journal article" date="2012" name="J. Lipid Res.">
        <title>EH3 (ABHD9): the first member of a new epoxide hydrolase family with high activity for fatty acid epoxides.</title>
        <authorList>
            <person name="Decker M."/>
            <person name="Adamska M."/>
            <person name="Cronin A."/>
            <person name="Di Giallonardo F."/>
            <person name="Burgener J."/>
            <person name="Marowsky A."/>
            <person name="Falck J.R."/>
            <person name="Morisseau C."/>
            <person name="Hammock B.D."/>
            <person name="Gruzdev A."/>
            <person name="Zeldin D.C."/>
            <person name="Arand M."/>
        </authorList>
    </citation>
    <scope>FUNCTION</scope>
    <scope>CATALYTIC ACTIVITY</scope>
    <scope>ACTIVITY REGULATION</scope>
    <scope>BIOPHYSICOCHEMICAL PROPERTIES</scope>
</reference>
<reference key="21">
    <citation type="journal article" date="2014" name="J. Proteomics">
        <title>An enzyme assisted RP-RPLC approach for in-depth analysis of human liver phosphoproteome.</title>
        <authorList>
            <person name="Bian Y."/>
            <person name="Song C."/>
            <person name="Cheng K."/>
            <person name="Dong M."/>
            <person name="Wang F."/>
            <person name="Huang J."/>
            <person name="Sun D."/>
            <person name="Wang L."/>
            <person name="Ye M."/>
            <person name="Zou H."/>
        </authorList>
    </citation>
    <scope>IDENTIFICATION BY MASS SPECTROMETRY [LARGE SCALE ANALYSIS]</scope>
    <source>
        <tissue>Liver</tissue>
    </source>
</reference>
<reference key="22">
    <citation type="journal article" date="2004" name="Biochemistry">
        <title>Structure of human epoxide hydrolase reveals mechanistic inferences on bifunctional catalysis in epoxide and phosphate ester hydrolysis.</title>
        <authorList>
            <person name="Gomez G.A."/>
            <person name="Morisseau C."/>
            <person name="Hammock B.D."/>
            <person name="Christianson D.W."/>
        </authorList>
    </citation>
    <scope>X-RAY CRYSTALLOGRAPHY (2.6 ANGSTROMS) IN COMPLEX WITH PHOSPHATE; MAGNESIUM AND EPOXIDE HYDROLASE INHIBITOR</scope>
    <scope>ACTIVE SITE</scope>
</reference>
<reference key="23">
    <citation type="journal article" date="2006" name="Protein Sci.">
        <title>Human soluble epoxide hydrolase: structural basis of inhibition by 4-(3-cyclohexylureido)-carboxylic acids.</title>
        <authorList>
            <person name="Gomez G.A."/>
            <person name="Morisseau C."/>
            <person name="Hammock B.D."/>
            <person name="Christianson D.W."/>
        </authorList>
    </citation>
    <scope>X-RAY CRYSTALLOGRAPHY (2.30 ANGSTROMS) IN COMPLEXES WITH DIALKYLUREA INHIBITORS AND MAGNESIUM</scope>
    <scope>ACTIVE SITE</scope>
</reference>
<reference key="24">
    <citation type="journal article" date="2009" name="J. Med. Chem.">
        <title>Structure-based optimization of arylamides as inhibitors of soluble epoxide hydrolase.</title>
        <authorList>
            <person name="Eldrup A.B."/>
            <person name="Soleymanzadeh F."/>
            <person name="Taylor S.J."/>
            <person name="Muegge I."/>
            <person name="Farrow N.A."/>
            <person name="Joseph D."/>
            <person name="McKellop K."/>
            <person name="Man C.C."/>
            <person name="Kukulka A."/>
            <person name="De Lombaert S."/>
        </authorList>
    </citation>
    <scope>X-RAY CRYSTALLOGRAPHY (1.95 ANGSTROMS) IN COMPLEXES WITH ARYLAMIDE INHIBITORS</scope>
    <scope>ACTIVE SITE</scope>
</reference>
<reference key="25">
    <citation type="journal article" date="2010" name="Bioorg. Med. Chem. Lett.">
        <title>Optimization of piperidyl-ureas as inhibitors of soluble epoxide hydrolase.</title>
        <authorList>
            <person name="Eldrup A.B."/>
            <person name="Soleymanzadeh F."/>
            <person name="Farrow N.A."/>
            <person name="Kukulka A."/>
            <person name="De Lombaert S."/>
        </authorList>
    </citation>
    <scope>X-RAY CRYSTALLOGRAPHY (2.79 ANGSTROMS) IN COMPLEX WITH SYNTHETIC INHIBITOR</scope>
    <scope>ACTIVE SITE</scope>
</reference>
<reference key="26">
    <citation type="journal article" date="2010" name="Bioorg. Med. Chem. Lett.">
        <title>Substituted pyrazoles as novel sEH antagonist: investigation of key binding interactions within the catalytic domain.</title>
        <authorList>
            <person name="Lo H.Y."/>
            <person name="Man C.C."/>
            <person name="Fleck R.W."/>
            <person name="Farrow N.A."/>
            <person name="Ingraham R.H."/>
            <person name="Kukulka A."/>
            <person name="Proudfoot J.R."/>
            <person name="Betageri R."/>
            <person name="Kirrane T."/>
            <person name="Patel U."/>
            <person name="Sharma R."/>
            <person name="Hoermann M.A."/>
            <person name="Kabcenell A."/>
            <person name="Lombaert S.D."/>
        </authorList>
    </citation>
    <scope>X-RAY CRYSTALLOGRAPHY (3.00 ANGSTROMS) IN COMPLEX WITH SYNTHETIC INHIBITOR</scope>
    <scope>ACTIVE SITE</scope>
</reference>
<accession>P34913</accession>
<accession>B2Z3B1</accession>
<accession>B3KTU8</accession>
<accession>B3KUA0</accession>
<accession>G3V134</accession>
<accession>J3KPH7</accession>
<accession>Q16764</accession>
<accession>Q9HBJ1</accession>
<accession>Q9HBJ2</accession>
<name>HYES_HUMAN</name>
<proteinExistence type="evidence at protein level"/>
<organism>
    <name type="scientific">Homo sapiens</name>
    <name type="common">Human</name>
    <dbReference type="NCBI Taxonomy" id="9606"/>
    <lineage>
        <taxon>Eukaryota</taxon>
        <taxon>Metazoa</taxon>
        <taxon>Chordata</taxon>
        <taxon>Craniata</taxon>
        <taxon>Vertebrata</taxon>
        <taxon>Euteleostomi</taxon>
        <taxon>Mammalia</taxon>
        <taxon>Eutheria</taxon>
        <taxon>Euarchontoglires</taxon>
        <taxon>Primates</taxon>
        <taxon>Haplorrhini</taxon>
        <taxon>Catarrhini</taxon>
        <taxon>Hominidae</taxon>
        <taxon>Homo</taxon>
    </lineage>
</organism>
<dbReference type="EC" id="3.3.2.10" evidence="6 7 10 19"/>
<dbReference type="EC" id="3.1.3.76" evidence="5 6"/>
<dbReference type="EMBL" id="L05779">
    <property type="protein sequence ID" value="AAA02756.1"/>
    <property type="molecule type" value="mRNA"/>
</dbReference>
<dbReference type="EMBL" id="X97024">
    <property type="protein sequence ID" value="CAA65751.1"/>
    <property type="molecule type" value="Genomic_DNA"/>
</dbReference>
<dbReference type="EMBL" id="X97025">
    <property type="protein sequence ID" value="CAA65751.1"/>
    <property type="status" value="JOINED"/>
    <property type="molecule type" value="Genomic_DNA"/>
</dbReference>
<dbReference type="EMBL" id="X97026">
    <property type="protein sequence ID" value="CAA65751.1"/>
    <property type="status" value="JOINED"/>
    <property type="molecule type" value="Genomic_DNA"/>
</dbReference>
<dbReference type="EMBL" id="X97027">
    <property type="protein sequence ID" value="CAA65751.1"/>
    <property type="status" value="JOINED"/>
    <property type="molecule type" value="Genomic_DNA"/>
</dbReference>
<dbReference type="EMBL" id="X97028">
    <property type="protein sequence ID" value="CAA65751.1"/>
    <property type="status" value="JOINED"/>
    <property type="molecule type" value="Genomic_DNA"/>
</dbReference>
<dbReference type="EMBL" id="X97029">
    <property type="protein sequence ID" value="CAA65751.1"/>
    <property type="status" value="JOINED"/>
    <property type="molecule type" value="Genomic_DNA"/>
</dbReference>
<dbReference type="EMBL" id="X97030">
    <property type="protein sequence ID" value="CAA65751.1"/>
    <property type="status" value="JOINED"/>
    <property type="molecule type" value="Genomic_DNA"/>
</dbReference>
<dbReference type="EMBL" id="X97031">
    <property type="protein sequence ID" value="CAA65751.1"/>
    <property type="status" value="JOINED"/>
    <property type="molecule type" value="Genomic_DNA"/>
</dbReference>
<dbReference type="EMBL" id="X97032">
    <property type="protein sequence ID" value="CAA65751.1"/>
    <property type="status" value="JOINED"/>
    <property type="molecule type" value="Genomic_DNA"/>
</dbReference>
<dbReference type="EMBL" id="X97033">
    <property type="protein sequence ID" value="CAA65751.1"/>
    <property type="status" value="JOINED"/>
    <property type="molecule type" value="Genomic_DNA"/>
</dbReference>
<dbReference type="EMBL" id="X97034">
    <property type="protein sequence ID" value="CAA65751.1"/>
    <property type="status" value="JOINED"/>
    <property type="molecule type" value="Genomic_DNA"/>
</dbReference>
<dbReference type="EMBL" id="X97035">
    <property type="protein sequence ID" value="CAA65751.1"/>
    <property type="status" value="JOINED"/>
    <property type="molecule type" value="Genomic_DNA"/>
</dbReference>
<dbReference type="EMBL" id="X97036">
    <property type="protein sequence ID" value="CAA65751.1"/>
    <property type="status" value="JOINED"/>
    <property type="molecule type" value="Genomic_DNA"/>
</dbReference>
<dbReference type="EMBL" id="X97037">
    <property type="protein sequence ID" value="CAA65751.1"/>
    <property type="status" value="JOINED"/>
    <property type="molecule type" value="Genomic_DNA"/>
</dbReference>
<dbReference type="EMBL" id="X97038">
    <property type="protein sequence ID" value="CAA65751.1"/>
    <property type="status" value="JOINED"/>
    <property type="molecule type" value="Genomic_DNA"/>
</dbReference>
<dbReference type="EMBL" id="AF233334">
    <property type="protein sequence ID" value="AAG14966.1"/>
    <property type="molecule type" value="mRNA"/>
</dbReference>
<dbReference type="EMBL" id="AF233335">
    <property type="protein sequence ID" value="AAG14967.1"/>
    <property type="molecule type" value="mRNA"/>
</dbReference>
<dbReference type="EMBL" id="AF233336">
    <property type="protein sequence ID" value="AAG14968.1"/>
    <property type="molecule type" value="mRNA"/>
</dbReference>
<dbReference type="EMBL" id="BT006885">
    <property type="protein sequence ID" value="AAP35531.1"/>
    <property type="molecule type" value="mRNA"/>
</dbReference>
<dbReference type="EMBL" id="AK096089">
    <property type="protein sequence ID" value="BAG53210.1"/>
    <property type="molecule type" value="mRNA"/>
</dbReference>
<dbReference type="EMBL" id="AK096770">
    <property type="protein sequence ID" value="BAG53362.1"/>
    <property type="molecule type" value="mRNA"/>
</dbReference>
<dbReference type="EMBL" id="EU584434">
    <property type="protein sequence ID" value="ACD11487.1"/>
    <property type="molecule type" value="Genomic_DNA"/>
</dbReference>
<dbReference type="EMBL" id="AF311103">
    <property type="status" value="NOT_ANNOTATED_CDS"/>
    <property type="molecule type" value="Genomic_DNA"/>
</dbReference>
<dbReference type="EMBL" id="CH471080">
    <property type="protein sequence ID" value="EAW63548.1"/>
    <property type="molecule type" value="Genomic_DNA"/>
</dbReference>
<dbReference type="EMBL" id="CH471080">
    <property type="protein sequence ID" value="EAW63549.1"/>
    <property type="molecule type" value="Genomic_DNA"/>
</dbReference>
<dbReference type="EMBL" id="CH471080">
    <property type="protein sequence ID" value="EAW63551.1"/>
    <property type="molecule type" value="Genomic_DNA"/>
</dbReference>
<dbReference type="EMBL" id="BC007708">
    <property type="protein sequence ID" value="AAH07708.1"/>
    <property type="molecule type" value="mRNA"/>
</dbReference>
<dbReference type="EMBL" id="BC011628">
    <property type="protein sequence ID" value="AAH11628.1"/>
    <property type="molecule type" value="mRNA"/>
</dbReference>
<dbReference type="EMBL" id="BC013874">
    <property type="protein sequence ID" value="AAH13874.1"/>
    <property type="molecule type" value="mRNA"/>
</dbReference>
<dbReference type="CCDS" id="CCDS59097.1">
    <molecule id="P34913-2"/>
</dbReference>
<dbReference type="CCDS" id="CCDS59098.1">
    <molecule id="P34913-3"/>
</dbReference>
<dbReference type="CCDS" id="CCDS6060.1">
    <molecule id="P34913-1"/>
</dbReference>
<dbReference type="PIR" id="JC4711">
    <property type="entry name" value="JC4711"/>
</dbReference>
<dbReference type="RefSeq" id="NP_001243411.1">
    <molecule id="P34913-2"/>
    <property type="nucleotide sequence ID" value="NM_001256482.2"/>
</dbReference>
<dbReference type="RefSeq" id="NP_001243412.1">
    <molecule id="P34913-3"/>
    <property type="nucleotide sequence ID" value="NM_001256483.2"/>
</dbReference>
<dbReference type="RefSeq" id="NP_001243413.1">
    <molecule id="P34913-2"/>
    <property type="nucleotide sequence ID" value="NM_001256484.2"/>
</dbReference>
<dbReference type="RefSeq" id="NP_001970.2">
    <molecule id="P34913-1"/>
    <property type="nucleotide sequence ID" value="NM_001979.5"/>
</dbReference>
<dbReference type="PDB" id="1S8O">
    <property type="method" value="X-ray"/>
    <property type="resolution" value="2.60 A"/>
    <property type="chains" value="A=1-555"/>
</dbReference>
<dbReference type="PDB" id="1VJ5">
    <property type="method" value="X-ray"/>
    <property type="resolution" value="2.35 A"/>
    <property type="chains" value="A=1-555"/>
</dbReference>
<dbReference type="PDB" id="1ZD2">
    <property type="method" value="X-ray"/>
    <property type="resolution" value="3.00 A"/>
    <property type="chains" value="P=1-555"/>
</dbReference>
<dbReference type="PDB" id="1ZD3">
    <property type="method" value="X-ray"/>
    <property type="resolution" value="2.30 A"/>
    <property type="chains" value="A=1-555"/>
</dbReference>
<dbReference type="PDB" id="1ZD4">
    <property type="method" value="X-ray"/>
    <property type="resolution" value="2.70 A"/>
    <property type="chains" value="A=1-555"/>
</dbReference>
<dbReference type="PDB" id="1ZD5">
    <property type="method" value="X-ray"/>
    <property type="resolution" value="2.60 A"/>
    <property type="chains" value="A=1-555"/>
</dbReference>
<dbReference type="PDB" id="3ANS">
    <property type="method" value="X-ray"/>
    <property type="resolution" value="1.98 A"/>
    <property type="chains" value="A/B=230-555"/>
</dbReference>
<dbReference type="PDB" id="3ANT">
    <property type="method" value="X-ray"/>
    <property type="resolution" value="2.40 A"/>
    <property type="chains" value="A/B=230-555"/>
</dbReference>
<dbReference type="PDB" id="3I1Y">
    <property type="method" value="X-ray"/>
    <property type="resolution" value="2.47 A"/>
    <property type="chains" value="A=1-555"/>
</dbReference>
<dbReference type="PDB" id="3I28">
    <property type="method" value="X-ray"/>
    <property type="resolution" value="1.95 A"/>
    <property type="chains" value="A=1-555"/>
</dbReference>
<dbReference type="PDB" id="3KOO">
    <property type="method" value="X-ray"/>
    <property type="resolution" value="2.79 A"/>
    <property type="chains" value="A=1-555"/>
</dbReference>
<dbReference type="PDB" id="3OTQ">
    <property type="method" value="X-ray"/>
    <property type="resolution" value="3.00 A"/>
    <property type="chains" value="A=1-555"/>
</dbReference>
<dbReference type="PDB" id="3PDC">
    <property type="method" value="X-ray"/>
    <property type="resolution" value="2.60 A"/>
    <property type="chains" value="A/B=226-548"/>
</dbReference>
<dbReference type="PDB" id="3WK4">
    <property type="method" value="X-ray"/>
    <property type="resolution" value="2.11 A"/>
    <property type="chains" value="A=1-555"/>
</dbReference>
<dbReference type="PDB" id="3WK5">
    <property type="method" value="X-ray"/>
    <property type="resolution" value="2.77 A"/>
    <property type="chains" value="A=1-555"/>
</dbReference>
<dbReference type="PDB" id="3WK6">
    <property type="method" value="X-ray"/>
    <property type="resolution" value="2.10 A"/>
    <property type="chains" value="A=1-555"/>
</dbReference>
<dbReference type="PDB" id="3WK7">
    <property type="method" value="X-ray"/>
    <property type="resolution" value="2.20 A"/>
    <property type="chains" value="A=1-555"/>
</dbReference>
<dbReference type="PDB" id="3WK8">
    <property type="method" value="X-ray"/>
    <property type="resolution" value="2.20 A"/>
    <property type="chains" value="A=1-555"/>
</dbReference>
<dbReference type="PDB" id="3WK9">
    <property type="method" value="X-ray"/>
    <property type="resolution" value="2.20 A"/>
    <property type="chains" value="A=1-555"/>
</dbReference>
<dbReference type="PDB" id="3WKA">
    <property type="method" value="X-ray"/>
    <property type="resolution" value="2.01 A"/>
    <property type="chains" value="A=1-555"/>
</dbReference>
<dbReference type="PDB" id="3WKB">
    <property type="method" value="X-ray"/>
    <property type="resolution" value="2.20 A"/>
    <property type="chains" value="A=1-555"/>
</dbReference>
<dbReference type="PDB" id="3WKC">
    <property type="method" value="X-ray"/>
    <property type="resolution" value="2.20 A"/>
    <property type="chains" value="A=1-555"/>
</dbReference>
<dbReference type="PDB" id="3WKD">
    <property type="method" value="X-ray"/>
    <property type="resolution" value="2.48 A"/>
    <property type="chains" value="A=1-555"/>
</dbReference>
<dbReference type="PDB" id="3WKE">
    <property type="method" value="X-ray"/>
    <property type="resolution" value="2.75 A"/>
    <property type="chains" value="A=1-555"/>
</dbReference>
<dbReference type="PDB" id="4C4X">
    <property type="method" value="X-ray"/>
    <property type="resolution" value="2.17 A"/>
    <property type="chains" value="A/B=230-555"/>
</dbReference>
<dbReference type="PDB" id="4C4Y">
    <property type="method" value="X-ray"/>
    <property type="resolution" value="2.41 A"/>
    <property type="chains" value="A=230-555"/>
</dbReference>
<dbReference type="PDB" id="4C4Z">
    <property type="method" value="X-ray"/>
    <property type="resolution" value="2.06 A"/>
    <property type="chains" value="A/B=230-555"/>
</dbReference>
<dbReference type="PDB" id="4HAI">
    <property type="method" value="X-ray"/>
    <property type="resolution" value="2.55 A"/>
    <property type="chains" value="A=1-555"/>
</dbReference>
<dbReference type="PDB" id="4J03">
    <property type="method" value="X-ray"/>
    <property type="resolution" value="2.92 A"/>
    <property type="chains" value="A=1-555"/>
</dbReference>
<dbReference type="PDB" id="4JNC">
    <property type="method" value="X-ray"/>
    <property type="resolution" value="1.96 A"/>
    <property type="chains" value="A=238-549"/>
</dbReference>
<dbReference type="PDB" id="4OCZ">
    <property type="method" value="X-ray"/>
    <property type="resolution" value="2.94 A"/>
    <property type="chains" value="A=1-555"/>
</dbReference>
<dbReference type="PDB" id="4OD0">
    <property type="method" value="X-ray"/>
    <property type="resolution" value="2.92 A"/>
    <property type="chains" value="A=1-555"/>
</dbReference>
<dbReference type="PDB" id="4X6X">
    <property type="method" value="X-ray"/>
    <property type="resolution" value="1.80 A"/>
    <property type="chains" value="A/B=230-555"/>
</dbReference>
<dbReference type="PDB" id="4X6Y">
    <property type="method" value="X-ray"/>
    <property type="resolution" value="2.10 A"/>
    <property type="chains" value="A/B=230-555"/>
</dbReference>
<dbReference type="PDB" id="4Y2J">
    <property type="method" value="X-ray"/>
    <property type="resolution" value="2.15 A"/>
    <property type="chains" value="A=1-555"/>
</dbReference>
<dbReference type="PDB" id="4Y2P">
    <property type="method" value="X-ray"/>
    <property type="resolution" value="2.05 A"/>
    <property type="chains" value="A=1-555"/>
</dbReference>
<dbReference type="PDB" id="4Y2Q">
    <property type="method" value="X-ray"/>
    <property type="resolution" value="2.40 A"/>
    <property type="chains" value="A=1-555"/>
</dbReference>
<dbReference type="PDB" id="4Y2R">
    <property type="method" value="X-ray"/>
    <property type="resolution" value="2.45 A"/>
    <property type="chains" value="A=1-555"/>
</dbReference>
<dbReference type="PDB" id="4Y2S">
    <property type="method" value="X-ray"/>
    <property type="resolution" value="2.30 A"/>
    <property type="chains" value="A=1-555"/>
</dbReference>
<dbReference type="PDB" id="4Y2T">
    <property type="method" value="X-ray"/>
    <property type="resolution" value="2.40 A"/>
    <property type="chains" value="A=1-555"/>
</dbReference>
<dbReference type="PDB" id="4Y2U">
    <property type="method" value="X-ray"/>
    <property type="resolution" value="2.75 A"/>
    <property type="chains" value="A=1-555"/>
</dbReference>
<dbReference type="PDB" id="4Y2V">
    <property type="method" value="X-ray"/>
    <property type="resolution" value="2.40 A"/>
    <property type="chains" value="A=1-555"/>
</dbReference>
<dbReference type="PDB" id="4Y2X">
    <property type="method" value="X-ray"/>
    <property type="resolution" value="2.50 A"/>
    <property type="chains" value="A=1-555"/>
</dbReference>
<dbReference type="PDB" id="4Y2Y">
    <property type="method" value="X-ray"/>
    <property type="resolution" value="2.30 A"/>
    <property type="chains" value="A=1-555"/>
</dbReference>
<dbReference type="PDB" id="5AHX">
    <property type="method" value="X-ray"/>
    <property type="resolution" value="2.00 A"/>
    <property type="chains" value="A=1-548"/>
</dbReference>
<dbReference type="PDB" id="5AI0">
    <property type="method" value="X-ray"/>
    <property type="resolution" value="1.75 A"/>
    <property type="chains" value="A=1-548"/>
</dbReference>
<dbReference type="PDB" id="5AI4">
    <property type="method" value="X-ray"/>
    <property type="resolution" value="1.93 A"/>
    <property type="chains" value="A=1-548"/>
</dbReference>
<dbReference type="PDB" id="5AI5">
    <property type="method" value="X-ray"/>
    <property type="resolution" value="2.28 A"/>
    <property type="chains" value="A=1-548"/>
</dbReference>
<dbReference type="PDB" id="5AI6">
    <property type="method" value="X-ray"/>
    <property type="resolution" value="2.30 A"/>
    <property type="chains" value="A=1-548"/>
</dbReference>
<dbReference type="PDB" id="5AI8">
    <property type="method" value="X-ray"/>
    <property type="resolution" value="1.85 A"/>
    <property type="chains" value="A=1-548"/>
</dbReference>
<dbReference type="PDB" id="5AI9">
    <property type="method" value="X-ray"/>
    <property type="resolution" value="1.80 A"/>
    <property type="chains" value="A=1-548"/>
</dbReference>
<dbReference type="PDB" id="5AIA">
    <property type="method" value="X-ray"/>
    <property type="resolution" value="2.26 A"/>
    <property type="chains" value="A=1-548"/>
</dbReference>
<dbReference type="PDB" id="5AIB">
    <property type="method" value="X-ray"/>
    <property type="resolution" value="1.95 A"/>
    <property type="chains" value="A=1-548"/>
</dbReference>
<dbReference type="PDB" id="5AIC">
    <property type="method" value="X-ray"/>
    <property type="resolution" value="1.89 A"/>
    <property type="chains" value="A=1-548"/>
</dbReference>
<dbReference type="PDB" id="5AK3">
    <property type="method" value="X-ray"/>
    <property type="resolution" value="2.28 A"/>
    <property type="chains" value="A=1-548"/>
</dbReference>
<dbReference type="PDB" id="5AK4">
    <property type="method" value="X-ray"/>
    <property type="resolution" value="1.79 A"/>
    <property type="chains" value="A=1-548"/>
</dbReference>
<dbReference type="PDB" id="5AK5">
    <property type="method" value="X-ray"/>
    <property type="resolution" value="2.22 A"/>
    <property type="chains" value="A=1-548"/>
</dbReference>
<dbReference type="PDB" id="5AK6">
    <property type="method" value="X-ray"/>
    <property type="resolution" value="2.15 A"/>
    <property type="chains" value="A=1-548"/>
</dbReference>
<dbReference type="PDB" id="5AKE">
    <property type="method" value="X-ray"/>
    <property type="resolution" value="2.26 A"/>
    <property type="chains" value="A=1-548"/>
</dbReference>
<dbReference type="PDB" id="5AKG">
    <property type="method" value="X-ray"/>
    <property type="resolution" value="2.51 A"/>
    <property type="chains" value="A=1-548"/>
</dbReference>
<dbReference type="PDB" id="5AKH">
    <property type="method" value="X-ray"/>
    <property type="resolution" value="2.10 A"/>
    <property type="chains" value="A=1-548"/>
</dbReference>
<dbReference type="PDB" id="5AKI">
    <property type="method" value="X-ray"/>
    <property type="resolution" value="1.81 A"/>
    <property type="chains" value="A=1-548"/>
</dbReference>
<dbReference type="PDB" id="5AKJ">
    <property type="method" value="X-ray"/>
    <property type="resolution" value="2.03 A"/>
    <property type="chains" value="A=1-548"/>
</dbReference>
<dbReference type="PDB" id="5AKK">
    <property type="method" value="X-ray"/>
    <property type="resolution" value="1.90 A"/>
    <property type="chains" value="A=1-548"/>
</dbReference>
<dbReference type="PDB" id="5AKL">
    <property type="method" value="X-ray"/>
    <property type="resolution" value="2.00 A"/>
    <property type="chains" value="A=1-548"/>
</dbReference>
<dbReference type="PDB" id="5AKX">
    <property type="method" value="X-ray"/>
    <property type="resolution" value="2.09 A"/>
    <property type="chains" value="A=1-548"/>
</dbReference>
<dbReference type="PDB" id="5AKY">
    <property type="method" value="X-ray"/>
    <property type="resolution" value="2.18 A"/>
    <property type="chains" value="A=1-548"/>
</dbReference>
<dbReference type="PDB" id="5AKZ">
    <property type="method" value="X-ray"/>
    <property type="resolution" value="2.18 A"/>
    <property type="chains" value="A=1-548"/>
</dbReference>
<dbReference type="PDB" id="5ALD">
    <property type="method" value="X-ray"/>
    <property type="resolution" value="2.26 A"/>
    <property type="chains" value="A=1-548"/>
</dbReference>
<dbReference type="PDB" id="5ALE">
    <property type="method" value="X-ray"/>
    <property type="resolution" value="1.95 A"/>
    <property type="chains" value="A=1-548"/>
</dbReference>
<dbReference type="PDB" id="5ALF">
    <property type="method" value="X-ray"/>
    <property type="resolution" value="2.32 A"/>
    <property type="chains" value="A=1-548"/>
</dbReference>
<dbReference type="PDB" id="5ALG">
    <property type="method" value="X-ray"/>
    <property type="resolution" value="2.40 A"/>
    <property type="chains" value="A=1-548"/>
</dbReference>
<dbReference type="PDB" id="5ALH">
    <property type="method" value="X-ray"/>
    <property type="resolution" value="1.90 A"/>
    <property type="chains" value="A=1-548"/>
</dbReference>
<dbReference type="PDB" id="5ALI">
    <property type="method" value="X-ray"/>
    <property type="resolution" value="1.85 A"/>
    <property type="chains" value="A=1-548"/>
</dbReference>
<dbReference type="PDB" id="5ALJ">
    <property type="method" value="X-ray"/>
    <property type="resolution" value="2.10 A"/>
    <property type="chains" value="A=1-548"/>
</dbReference>
<dbReference type="PDB" id="5ALK">
    <property type="method" value="X-ray"/>
    <property type="resolution" value="2.33 A"/>
    <property type="chains" value="A=1-548"/>
</dbReference>
<dbReference type="PDB" id="5ALL">
    <property type="method" value="X-ray"/>
    <property type="resolution" value="2.20 A"/>
    <property type="chains" value="A=1-548"/>
</dbReference>
<dbReference type="PDB" id="5ALM">
    <property type="method" value="X-ray"/>
    <property type="resolution" value="2.00 A"/>
    <property type="chains" value="A=1-548"/>
</dbReference>
<dbReference type="PDB" id="5ALN">
    <property type="method" value="X-ray"/>
    <property type="resolution" value="2.00 A"/>
    <property type="chains" value="A=1-548"/>
</dbReference>
<dbReference type="PDB" id="5ALO">
    <property type="method" value="X-ray"/>
    <property type="resolution" value="2.00 A"/>
    <property type="chains" value="A=1-548"/>
</dbReference>
<dbReference type="PDB" id="5ALP">
    <property type="method" value="X-ray"/>
    <property type="resolution" value="2.06 A"/>
    <property type="chains" value="A=1-548"/>
</dbReference>
<dbReference type="PDB" id="5ALQ">
    <property type="method" value="X-ray"/>
    <property type="resolution" value="2.78 A"/>
    <property type="chains" value="A=1-548"/>
</dbReference>
<dbReference type="PDB" id="5ALR">
    <property type="method" value="X-ray"/>
    <property type="resolution" value="2.60 A"/>
    <property type="chains" value="A=1-548"/>
</dbReference>
<dbReference type="PDB" id="5ALS">
    <property type="method" value="X-ray"/>
    <property type="resolution" value="2.57 A"/>
    <property type="chains" value="A=1-548"/>
</dbReference>
<dbReference type="PDB" id="5ALT">
    <property type="method" value="X-ray"/>
    <property type="resolution" value="2.15 A"/>
    <property type="chains" value="A=1-548"/>
</dbReference>
<dbReference type="PDB" id="5ALU">
    <property type="method" value="X-ray"/>
    <property type="resolution" value="1.87 A"/>
    <property type="chains" value="A=1-548"/>
</dbReference>
<dbReference type="PDB" id="5ALV">
    <property type="method" value="X-ray"/>
    <property type="resolution" value="1.80 A"/>
    <property type="chains" value="A=1-548"/>
</dbReference>
<dbReference type="PDB" id="5ALW">
    <property type="method" value="X-ray"/>
    <property type="resolution" value="2.20 A"/>
    <property type="chains" value="A=1-548"/>
</dbReference>
<dbReference type="PDB" id="5ALX">
    <property type="method" value="X-ray"/>
    <property type="resolution" value="2.23 A"/>
    <property type="chains" value="A=1-548"/>
</dbReference>
<dbReference type="PDB" id="5ALY">
    <property type="method" value="X-ray"/>
    <property type="resolution" value="1.90 A"/>
    <property type="chains" value="A=1-548"/>
</dbReference>
<dbReference type="PDB" id="5ALZ">
    <property type="method" value="X-ray"/>
    <property type="resolution" value="2.30 A"/>
    <property type="chains" value="A=1-548"/>
</dbReference>
<dbReference type="PDB" id="5AM0">
    <property type="method" value="X-ray"/>
    <property type="resolution" value="1.88 A"/>
    <property type="chains" value="A=1-548"/>
</dbReference>
<dbReference type="PDB" id="5AM1">
    <property type="method" value="X-ray"/>
    <property type="resolution" value="2.15 A"/>
    <property type="chains" value="A=1-548"/>
</dbReference>
<dbReference type="PDB" id="5AM2">
    <property type="method" value="X-ray"/>
    <property type="resolution" value="1.70 A"/>
    <property type="chains" value="A=1-548"/>
</dbReference>
<dbReference type="PDB" id="5AM3">
    <property type="method" value="X-ray"/>
    <property type="resolution" value="2.20 A"/>
    <property type="chains" value="A=1-548"/>
</dbReference>
<dbReference type="PDB" id="5AM4">
    <property type="method" value="X-ray"/>
    <property type="resolution" value="1.87 A"/>
    <property type="chains" value="A=1-548"/>
</dbReference>
<dbReference type="PDB" id="5AM5">
    <property type="method" value="X-ray"/>
    <property type="resolution" value="2.26 A"/>
    <property type="chains" value="A=1-548"/>
</dbReference>
<dbReference type="PDB" id="5FP0">
    <property type="method" value="X-ray"/>
    <property type="resolution" value="2.35 A"/>
    <property type="chains" value="A=1-548"/>
</dbReference>
<dbReference type="PDB" id="5MWA">
    <property type="method" value="X-ray"/>
    <property type="resolution" value="1.55 A"/>
    <property type="chains" value="A=2-224"/>
</dbReference>
<dbReference type="PDB" id="6AUM">
    <property type="method" value="X-ray"/>
    <property type="resolution" value="2.95 A"/>
    <property type="chains" value="A=1-555"/>
</dbReference>
<dbReference type="PDB" id="6I5E">
    <property type="method" value="X-ray"/>
    <property type="resolution" value="2.60 A"/>
    <property type="chains" value="A/B=230-555"/>
</dbReference>
<dbReference type="PDB" id="6I5G">
    <property type="method" value="X-ray"/>
    <property type="resolution" value="2.00 A"/>
    <property type="chains" value="A/B=230-555"/>
</dbReference>
<dbReference type="PDB" id="7EBA">
    <property type="method" value="X-ray"/>
    <property type="resolution" value="2.30 A"/>
    <property type="chains" value="A/B=230-555"/>
</dbReference>
<dbReference type="PDB" id="8QVF">
    <property type="method" value="X-ray"/>
    <property type="resolution" value="2.40 A"/>
    <property type="chains" value="A=1-548"/>
</dbReference>
<dbReference type="PDB" id="8QVG">
    <property type="method" value="X-ray"/>
    <property type="resolution" value="2.20 A"/>
    <property type="chains" value="A=1-548"/>
</dbReference>
<dbReference type="PDB" id="8QVH">
    <property type="method" value="X-ray"/>
    <property type="resolution" value="2.24 A"/>
    <property type="chains" value="A=1-548"/>
</dbReference>
<dbReference type="PDB" id="8QVK">
    <property type="method" value="X-ray"/>
    <property type="resolution" value="2.10 A"/>
    <property type="chains" value="A=1-548"/>
</dbReference>
<dbReference type="PDB" id="8QVL">
    <property type="method" value="X-ray"/>
    <property type="resolution" value="2.14 A"/>
    <property type="chains" value="A=1-548"/>
</dbReference>
<dbReference type="PDB" id="8QVM">
    <property type="method" value="X-ray"/>
    <property type="resolution" value="2.00 A"/>
    <property type="chains" value="A=1-548"/>
</dbReference>
<dbReference type="PDB" id="8QWG">
    <property type="method" value="X-ray"/>
    <property type="resolution" value="2.20 A"/>
    <property type="chains" value="A=1-548"/>
</dbReference>
<dbReference type="PDB" id="8QWI">
    <property type="method" value="X-ray"/>
    <property type="resolution" value="2.12 A"/>
    <property type="chains" value="A=1-548"/>
</dbReference>
<dbReference type="PDB" id="8ZBL">
    <property type="method" value="X-ray"/>
    <property type="resolution" value="2.70 A"/>
    <property type="chains" value="A=1-555"/>
</dbReference>
<dbReference type="PDBsum" id="1S8O"/>
<dbReference type="PDBsum" id="1VJ5"/>
<dbReference type="PDBsum" id="1ZD2"/>
<dbReference type="PDBsum" id="1ZD3"/>
<dbReference type="PDBsum" id="1ZD4"/>
<dbReference type="PDBsum" id="1ZD5"/>
<dbReference type="PDBsum" id="3ANS"/>
<dbReference type="PDBsum" id="3ANT"/>
<dbReference type="PDBsum" id="3I1Y"/>
<dbReference type="PDBsum" id="3I28"/>
<dbReference type="PDBsum" id="3KOO"/>
<dbReference type="PDBsum" id="3OTQ"/>
<dbReference type="PDBsum" id="3PDC"/>
<dbReference type="PDBsum" id="3WK4"/>
<dbReference type="PDBsum" id="3WK5"/>
<dbReference type="PDBsum" id="3WK6"/>
<dbReference type="PDBsum" id="3WK7"/>
<dbReference type="PDBsum" id="3WK8"/>
<dbReference type="PDBsum" id="3WK9"/>
<dbReference type="PDBsum" id="3WKA"/>
<dbReference type="PDBsum" id="3WKB"/>
<dbReference type="PDBsum" id="3WKC"/>
<dbReference type="PDBsum" id="3WKD"/>
<dbReference type="PDBsum" id="3WKE"/>
<dbReference type="PDBsum" id="4C4X"/>
<dbReference type="PDBsum" id="4C4Y"/>
<dbReference type="PDBsum" id="4C4Z"/>
<dbReference type="PDBsum" id="4HAI"/>
<dbReference type="PDBsum" id="4J03"/>
<dbReference type="PDBsum" id="4JNC"/>
<dbReference type="PDBsum" id="4OCZ"/>
<dbReference type="PDBsum" id="4OD0"/>
<dbReference type="PDBsum" id="4X6X"/>
<dbReference type="PDBsum" id="4X6Y"/>
<dbReference type="PDBsum" id="4Y2J"/>
<dbReference type="PDBsum" id="4Y2P"/>
<dbReference type="PDBsum" id="4Y2Q"/>
<dbReference type="PDBsum" id="4Y2R"/>
<dbReference type="PDBsum" id="4Y2S"/>
<dbReference type="PDBsum" id="4Y2T"/>
<dbReference type="PDBsum" id="4Y2U"/>
<dbReference type="PDBsum" id="4Y2V"/>
<dbReference type="PDBsum" id="4Y2X"/>
<dbReference type="PDBsum" id="4Y2Y"/>
<dbReference type="PDBsum" id="5AHX"/>
<dbReference type="PDBsum" id="5AI0"/>
<dbReference type="PDBsum" id="5AI4"/>
<dbReference type="PDBsum" id="5AI5"/>
<dbReference type="PDBsum" id="5AI6"/>
<dbReference type="PDBsum" id="5AI8"/>
<dbReference type="PDBsum" id="5AI9"/>
<dbReference type="PDBsum" id="5AIA"/>
<dbReference type="PDBsum" id="5AIB"/>
<dbReference type="PDBsum" id="5AIC"/>
<dbReference type="PDBsum" id="5AK3"/>
<dbReference type="PDBsum" id="5AK4"/>
<dbReference type="PDBsum" id="5AK5"/>
<dbReference type="PDBsum" id="5AK6"/>
<dbReference type="PDBsum" id="5AKE"/>
<dbReference type="PDBsum" id="5AKG"/>
<dbReference type="PDBsum" id="5AKH"/>
<dbReference type="PDBsum" id="5AKI"/>
<dbReference type="PDBsum" id="5AKJ"/>
<dbReference type="PDBsum" id="5AKK"/>
<dbReference type="PDBsum" id="5AKL"/>
<dbReference type="PDBsum" id="5AKX"/>
<dbReference type="PDBsum" id="5AKY"/>
<dbReference type="PDBsum" id="5AKZ"/>
<dbReference type="PDBsum" id="5ALD"/>
<dbReference type="PDBsum" id="5ALE"/>
<dbReference type="PDBsum" id="5ALF"/>
<dbReference type="PDBsum" id="5ALG"/>
<dbReference type="PDBsum" id="5ALH"/>
<dbReference type="PDBsum" id="5ALI"/>
<dbReference type="PDBsum" id="5ALJ"/>
<dbReference type="PDBsum" id="5ALK"/>
<dbReference type="PDBsum" id="5ALL"/>
<dbReference type="PDBsum" id="5ALM"/>
<dbReference type="PDBsum" id="5ALN"/>
<dbReference type="PDBsum" id="5ALO"/>
<dbReference type="PDBsum" id="5ALP"/>
<dbReference type="PDBsum" id="5ALQ"/>
<dbReference type="PDBsum" id="5ALR"/>
<dbReference type="PDBsum" id="5ALS"/>
<dbReference type="PDBsum" id="5ALT"/>
<dbReference type="PDBsum" id="5ALU"/>
<dbReference type="PDBsum" id="5ALV"/>
<dbReference type="PDBsum" id="5ALW"/>
<dbReference type="PDBsum" id="5ALX"/>
<dbReference type="PDBsum" id="5ALY"/>
<dbReference type="PDBsum" id="5ALZ"/>
<dbReference type="PDBsum" id="5AM0"/>
<dbReference type="PDBsum" id="5AM1"/>
<dbReference type="PDBsum" id="5AM2"/>
<dbReference type="PDBsum" id="5AM3"/>
<dbReference type="PDBsum" id="5AM4"/>
<dbReference type="PDBsum" id="5AM5"/>
<dbReference type="PDBsum" id="5FP0"/>
<dbReference type="PDBsum" id="5MWA"/>
<dbReference type="PDBsum" id="6AUM"/>
<dbReference type="PDBsum" id="6I5E"/>
<dbReference type="PDBsum" id="6I5G"/>
<dbReference type="PDBsum" id="7EBA"/>
<dbReference type="PDBsum" id="8QVF"/>
<dbReference type="PDBsum" id="8QVG"/>
<dbReference type="PDBsum" id="8QVH"/>
<dbReference type="PDBsum" id="8QVK"/>
<dbReference type="PDBsum" id="8QVL"/>
<dbReference type="PDBsum" id="8QVM"/>
<dbReference type="PDBsum" id="8QWG"/>
<dbReference type="PDBsum" id="8QWI"/>
<dbReference type="PDBsum" id="8ZBL"/>
<dbReference type="SMR" id="P34913"/>
<dbReference type="BioGRID" id="108367">
    <property type="interactions" value="19"/>
</dbReference>
<dbReference type="FunCoup" id="P34913">
    <property type="interactions" value="417"/>
</dbReference>
<dbReference type="IntAct" id="P34913">
    <property type="interactions" value="5"/>
</dbReference>
<dbReference type="STRING" id="9606.ENSP00000430269"/>
<dbReference type="BindingDB" id="P34913"/>
<dbReference type="ChEMBL" id="CHEMBL2409"/>
<dbReference type="DrugBank" id="DB07496">
    <property type="generic name" value="1,3-diphenylurea"/>
</dbReference>
<dbReference type="DrugBank" id="DB08257">
    <property type="generic name" value="4-{[(CYCLOHEXYLAMINO)CARBONYL]AMINO}BUTANOIC ACID"/>
</dbReference>
<dbReference type="DrugBank" id="DB08258">
    <property type="generic name" value="6-{[(CYCLOHEXYLAMINO)CARBONYL]AMINO}HEXANOIC ACID"/>
</dbReference>
<dbReference type="DrugBank" id="DB08259">
    <property type="generic name" value="7-{[(CYCLOHEXYLAMINO)CARBONYL]AMINO}HEPTANOIC ACID"/>
</dbReference>
<dbReference type="DrugBank" id="DB06345">
    <property type="generic name" value="AR-9281"/>
</dbReference>
<dbReference type="DrugBank" id="DB12610">
    <property type="generic name" value="Ebselen"/>
</dbReference>
<dbReference type="DrugBank" id="DB08256">
    <property type="generic name" value="N-[(CYCLOHEXYLAMINO)CARBONYL]GLYCINE"/>
</dbReference>
<dbReference type="DrugBank" id="DB02029">
    <property type="generic name" value="N-Cyclohexyl-N'-(4-Iodophenyl)Urea"/>
</dbReference>
<dbReference type="DrugBank" id="DB04213">
    <property type="generic name" value="N-Cyclohexyl-N'-(Propyl)Phenyl Urea"/>
</dbReference>
<dbReference type="DrugBank" id="DB03677">
    <property type="generic name" value="N-Cyclohexyl-N'-Decylurea"/>
</dbReference>
<dbReference type="DrugCentral" id="P34913"/>
<dbReference type="GuidetoPHARMACOLOGY" id="2970"/>
<dbReference type="SwissLipids" id="SLP:000001105"/>
<dbReference type="ESTHER" id="human-EPHX2">
    <property type="family name" value="Epoxide_hydrolase"/>
</dbReference>
<dbReference type="MEROPS" id="S33.973"/>
<dbReference type="DEPOD" id="EPHX2"/>
<dbReference type="GlyGen" id="P34913">
    <property type="glycosylation" value="1 site, 1 O-linked glycan (1 site)"/>
</dbReference>
<dbReference type="iPTMnet" id="P34913"/>
<dbReference type="PhosphoSitePlus" id="P34913"/>
<dbReference type="SwissPalm" id="P34913"/>
<dbReference type="BioMuta" id="EPHX2"/>
<dbReference type="DMDM" id="67476665"/>
<dbReference type="jPOST" id="P34913"/>
<dbReference type="MassIVE" id="P34913"/>
<dbReference type="PaxDb" id="9606-ENSP00000430269"/>
<dbReference type="PeptideAtlas" id="P34913"/>
<dbReference type="ProteomicsDB" id="32244"/>
<dbReference type="ProteomicsDB" id="54953">
    <molecule id="P34913-1"/>
</dbReference>
<dbReference type="Pumba" id="P34913"/>
<dbReference type="ABCD" id="P34913">
    <property type="antibodies" value="10 sequenced antibodies"/>
</dbReference>
<dbReference type="Antibodypedia" id="4070">
    <property type="antibodies" value="434 antibodies from 34 providers"/>
</dbReference>
<dbReference type="DNASU" id="2053"/>
<dbReference type="Ensembl" id="ENST00000380476.7">
    <molecule id="P34913-2"/>
    <property type="protein sequence ID" value="ENSP00000369843.3"/>
    <property type="gene ID" value="ENSG00000120915.14"/>
</dbReference>
<dbReference type="Ensembl" id="ENST00000521400.6">
    <molecule id="P34913-1"/>
    <property type="protein sequence ID" value="ENSP00000430269.1"/>
    <property type="gene ID" value="ENSG00000120915.14"/>
</dbReference>
<dbReference type="Ensembl" id="ENST00000521780.5">
    <molecule id="P34913-3"/>
    <property type="protein sequence ID" value="ENSP00000430302.1"/>
    <property type="gene ID" value="ENSG00000120915.14"/>
</dbReference>
<dbReference type="GeneID" id="2053"/>
<dbReference type="KEGG" id="hsa:2053"/>
<dbReference type="MANE-Select" id="ENST00000521400.6">
    <property type="protein sequence ID" value="ENSP00000430269.1"/>
    <property type="RefSeq nucleotide sequence ID" value="NM_001979.6"/>
    <property type="RefSeq protein sequence ID" value="NP_001970.2"/>
</dbReference>
<dbReference type="UCSC" id="uc003xfu.5">
    <molecule id="P34913-1"/>
    <property type="organism name" value="human"/>
</dbReference>
<dbReference type="AGR" id="HGNC:3402"/>
<dbReference type="CTD" id="2053"/>
<dbReference type="DisGeNET" id="2053"/>
<dbReference type="GeneCards" id="EPHX2"/>
<dbReference type="HGNC" id="HGNC:3402">
    <property type="gene designation" value="EPHX2"/>
</dbReference>
<dbReference type="HPA" id="ENSG00000120915">
    <property type="expression patterns" value="Tissue enhanced (liver)"/>
</dbReference>
<dbReference type="MalaCards" id="EPHX2"/>
<dbReference type="MIM" id="132811">
    <property type="type" value="gene"/>
</dbReference>
<dbReference type="neXtProt" id="NX_P34913"/>
<dbReference type="OpenTargets" id="ENSG00000120915"/>
<dbReference type="PharmGKB" id="PA27830"/>
<dbReference type="VEuPathDB" id="HostDB:ENSG00000120915"/>
<dbReference type="eggNOG" id="KOG3085">
    <property type="taxonomic scope" value="Eukaryota"/>
</dbReference>
<dbReference type="eggNOG" id="KOG4178">
    <property type="taxonomic scope" value="Eukaryota"/>
</dbReference>
<dbReference type="GeneTree" id="ENSGT00940000158614"/>
<dbReference type="HOGENOM" id="CLU_036085_1_1_1"/>
<dbReference type="InParanoid" id="P34913"/>
<dbReference type="OMA" id="YAMEVLC"/>
<dbReference type="OrthoDB" id="408373at2759"/>
<dbReference type="PAN-GO" id="P34913">
    <property type="GO annotations" value="5 GO annotations based on evolutionary models"/>
</dbReference>
<dbReference type="PhylomeDB" id="P34913"/>
<dbReference type="TreeFam" id="TF315395"/>
<dbReference type="BRENDA" id="3.1.3.106">
    <property type="organism ID" value="2681"/>
</dbReference>
<dbReference type="BRENDA" id="3.3.2.10">
    <property type="organism ID" value="2681"/>
</dbReference>
<dbReference type="PathwayCommons" id="P34913"/>
<dbReference type="Reactome" id="R-HSA-2142670">
    <property type="pathway name" value="Synthesis of epoxy (EET) and dihydroxyeicosatrienoic acids (DHET)"/>
</dbReference>
<dbReference type="Reactome" id="R-HSA-9018682">
    <property type="pathway name" value="Biosynthesis of maresins"/>
</dbReference>
<dbReference type="Reactome" id="R-HSA-9033241">
    <property type="pathway name" value="Peroxisomal protein import"/>
</dbReference>
<dbReference type="SABIO-RK" id="P34913"/>
<dbReference type="SignaLink" id="P34913"/>
<dbReference type="BioGRID-ORCS" id="2053">
    <property type="hits" value="12 hits in 1178 CRISPR screens"/>
</dbReference>
<dbReference type="ChiTaRS" id="EPHX2">
    <property type="organism name" value="human"/>
</dbReference>
<dbReference type="EvolutionaryTrace" id="P34913"/>
<dbReference type="GeneWiki" id="Epoxide_hydrolase_2"/>
<dbReference type="GenomeRNAi" id="2053"/>
<dbReference type="Pharos" id="P34913">
    <property type="development level" value="Tchem"/>
</dbReference>
<dbReference type="PRO" id="PR:P34913"/>
<dbReference type="Proteomes" id="UP000005640">
    <property type="component" value="Chromosome 8"/>
</dbReference>
<dbReference type="RNAct" id="P34913">
    <property type="molecule type" value="protein"/>
</dbReference>
<dbReference type="Bgee" id="ENSG00000120915">
    <property type="expression patterns" value="Expressed in right lobe of liver and 129 other cell types or tissues"/>
</dbReference>
<dbReference type="ExpressionAtlas" id="P34913">
    <property type="expression patterns" value="baseline and differential"/>
</dbReference>
<dbReference type="GO" id="GO:0005829">
    <property type="term" value="C:cytosol"/>
    <property type="evidence" value="ECO:0000314"/>
    <property type="project" value="HPA"/>
</dbReference>
<dbReference type="GO" id="GO:0070062">
    <property type="term" value="C:extracellular exosome"/>
    <property type="evidence" value="ECO:0007005"/>
    <property type="project" value="UniProtKB"/>
</dbReference>
<dbReference type="GO" id="GO:0005782">
    <property type="term" value="C:peroxisomal matrix"/>
    <property type="evidence" value="ECO:0000304"/>
    <property type="project" value="Reactome"/>
</dbReference>
<dbReference type="GO" id="GO:0005777">
    <property type="term" value="C:peroxisome"/>
    <property type="evidence" value="ECO:0000314"/>
    <property type="project" value="UniProtKB"/>
</dbReference>
<dbReference type="GO" id="GO:0033885">
    <property type="term" value="F:10-hydroxy-9-(phosphonooxy)octadecanoate phosphatase activity"/>
    <property type="evidence" value="ECO:0007669"/>
    <property type="project" value="UniProtKB-EC"/>
</dbReference>
<dbReference type="GO" id="GO:0004301">
    <property type="term" value="F:epoxide hydrolase activity"/>
    <property type="evidence" value="ECO:0000314"/>
    <property type="project" value="UniProtKB"/>
</dbReference>
<dbReference type="GO" id="GO:0042577">
    <property type="term" value="F:lipid phosphatase activity"/>
    <property type="evidence" value="ECO:0000314"/>
    <property type="project" value="UniProtKB"/>
</dbReference>
<dbReference type="GO" id="GO:0052642">
    <property type="term" value="F:lysophosphatidic acid phosphatase activity"/>
    <property type="evidence" value="ECO:0000314"/>
    <property type="project" value="UniProtKB"/>
</dbReference>
<dbReference type="GO" id="GO:0000287">
    <property type="term" value="F:magnesium ion binding"/>
    <property type="evidence" value="ECO:0000314"/>
    <property type="project" value="UniProtKB"/>
</dbReference>
<dbReference type="GO" id="GO:0016791">
    <property type="term" value="F:phosphatase activity"/>
    <property type="evidence" value="ECO:0000314"/>
    <property type="project" value="UniProtKB"/>
</dbReference>
<dbReference type="GO" id="GO:0042803">
    <property type="term" value="F:protein homodimerization activity"/>
    <property type="evidence" value="ECO:0000314"/>
    <property type="project" value="UniProtKB"/>
</dbReference>
<dbReference type="GO" id="GO:0015643">
    <property type="term" value="F:toxic substance binding"/>
    <property type="evidence" value="ECO:0000314"/>
    <property type="project" value="UniProtKB"/>
</dbReference>
<dbReference type="GO" id="GO:0042632">
    <property type="term" value="P:cholesterol homeostasis"/>
    <property type="evidence" value="ECO:0000314"/>
    <property type="project" value="UniProtKB"/>
</dbReference>
<dbReference type="GO" id="GO:0016311">
    <property type="term" value="P:dephosphorylation"/>
    <property type="evidence" value="ECO:0000314"/>
    <property type="project" value="UniProtKB"/>
</dbReference>
<dbReference type="GO" id="GO:0097176">
    <property type="term" value="P:epoxide metabolic process"/>
    <property type="evidence" value="ECO:0000314"/>
    <property type="project" value="UniProtKB"/>
</dbReference>
<dbReference type="GO" id="GO:0046839">
    <property type="term" value="P:phospholipid dephosphorylation"/>
    <property type="evidence" value="ECO:0000314"/>
    <property type="project" value="UniProtKB"/>
</dbReference>
<dbReference type="GO" id="GO:0010628">
    <property type="term" value="P:positive regulation of gene expression"/>
    <property type="evidence" value="ECO:0000314"/>
    <property type="project" value="UniProtKB"/>
</dbReference>
<dbReference type="GO" id="GO:0001558">
    <property type="term" value="P:regulation of cell growth"/>
    <property type="evidence" value="ECO:0000304"/>
    <property type="project" value="Xenbase"/>
</dbReference>
<dbReference type="GO" id="GO:0090181">
    <property type="term" value="P:regulation of cholesterol metabolic process"/>
    <property type="evidence" value="ECO:0000315"/>
    <property type="project" value="UniProtKB"/>
</dbReference>
<dbReference type="GO" id="GO:0009636">
    <property type="term" value="P:response to toxic substance"/>
    <property type="evidence" value="ECO:0007669"/>
    <property type="project" value="UniProtKB-KW"/>
</dbReference>
<dbReference type="GO" id="GO:0046272">
    <property type="term" value="P:stilbene catabolic process"/>
    <property type="evidence" value="ECO:0000314"/>
    <property type="project" value="UniProtKB"/>
</dbReference>
<dbReference type="CDD" id="cd02603">
    <property type="entry name" value="HAD_sEH-N_like"/>
    <property type="match status" value="1"/>
</dbReference>
<dbReference type="FunFam" id="1.10.150.240:FF:000011">
    <property type="entry name" value="Bifunctional epoxide hydrolase 2"/>
    <property type="match status" value="1"/>
</dbReference>
<dbReference type="FunFam" id="3.40.50.1820:FF:000067">
    <property type="entry name" value="Bifunctional epoxide hydrolase 2"/>
    <property type="match status" value="1"/>
</dbReference>
<dbReference type="Gene3D" id="3.40.50.1820">
    <property type="entry name" value="alpha/beta hydrolase"/>
    <property type="match status" value="1"/>
</dbReference>
<dbReference type="Gene3D" id="3.40.50.1000">
    <property type="entry name" value="HAD superfamily/HAD-like"/>
    <property type="match status" value="1"/>
</dbReference>
<dbReference type="Gene3D" id="1.10.150.240">
    <property type="entry name" value="Putative phosphatase, domain 2"/>
    <property type="match status" value="1"/>
</dbReference>
<dbReference type="InterPro" id="IPR000073">
    <property type="entry name" value="AB_hydrolase_1"/>
</dbReference>
<dbReference type="InterPro" id="IPR029058">
    <property type="entry name" value="AB_hydrolase_fold"/>
</dbReference>
<dbReference type="InterPro" id="IPR000639">
    <property type="entry name" value="Epox_hydrolase-like"/>
</dbReference>
<dbReference type="InterPro" id="IPR036412">
    <property type="entry name" value="HAD-like_sf"/>
</dbReference>
<dbReference type="InterPro" id="IPR006439">
    <property type="entry name" value="HAD-SF_hydro_IA"/>
</dbReference>
<dbReference type="InterPro" id="IPR011945">
    <property type="entry name" value="HAD-SF_ppase_IA/epoxid_hydro_N"/>
</dbReference>
<dbReference type="InterPro" id="IPR023214">
    <property type="entry name" value="HAD_sf"/>
</dbReference>
<dbReference type="InterPro" id="IPR023198">
    <property type="entry name" value="PGP-like_dom2"/>
</dbReference>
<dbReference type="NCBIfam" id="TIGR02247">
    <property type="entry name" value="HAD-1A3-hyp"/>
    <property type="match status" value="1"/>
</dbReference>
<dbReference type="NCBIfam" id="TIGR01509">
    <property type="entry name" value="HAD-SF-IA-v3"/>
    <property type="match status" value="1"/>
</dbReference>
<dbReference type="PANTHER" id="PTHR43329">
    <property type="entry name" value="EPOXIDE HYDROLASE"/>
    <property type="match status" value="1"/>
</dbReference>
<dbReference type="Pfam" id="PF00561">
    <property type="entry name" value="Abhydrolase_1"/>
    <property type="match status" value="1"/>
</dbReference>
<dbReference type="Pfam" id="PF00702">
    <property type="entry name" value="Hydrolase"/>
    <property type="match status" value="1"/>
</dbReference>
<dbReference type="PRINTS" id="PR00111">
    <property type="entry name" value="ABHYDROLASE"/>
</dbReference>
<dbReference type="PRINTS" id="PR00412">
    <property type="entry name" value="EPOXHYDRLASE"/>
</dbReference>
<dbReference type="SFLD" id="SFLDG01130">
    <property type="entry name" value="C1.5.1:_Epoxide_Hydrolase_Phos"/>
    <property type="match status" value="1"/>
</dbReference>
<dbReference type="SFLD" id="SFLDF00040">
    <property type="entry name" value="epoxide_hydrolase_n-terminal_p"/>
    <property type="match status" value="1"/>
</dbReference>
<dbReference type="SUPFAM" id="SSF53474">
    <property type="entry name" value="alpha/beta-Hydrolases"/>
    <property type="match status" value="1"/>
</dbReference>
<dbReference type="SUPFAM" id="SSF56784">
    <property type="entry name" value="HAD-like"/>
    <property type="match status" value="1"/>
</dbReference>